<sequence>MAFMKKYLLPILGLFMAYYYYSANEEFRPEMLQGKKVIVTGASKGIGREMAYHLAKMGAHVVVTARSKETLQKVVSHCLELGAASAHYIAGTMEDMTFAEQFVAQAGKLMGGLDMLILNHITNTSLNLFHDDIHHVRKSMEVNFLSYVVLTVAALPMLKQSNGSIVVVSSLAGKVAYPMVAAYSASKFALDGFFSSIRKEYSVSRVNVSITLCVLGLIDTETAMKAVSGIVHMQAAPKEECALEIIKGGALRQEEVYYDSSLWTTLLIRNPCRKILEFLYSTSYNMDRFINK</sequence>
<comment type="function">
    <text evidence="2 4 6 7 8 13 21 22 23 25 26 27 28 30 31 32">Controls the reversible conversion of biologically active glucocorticoids such as cortisone to cortisol, and 11-dehydrocorticosterone to corticosterone in the presence of NADP(H) (PubMed:10497248, PubMed:12460758, PubMed:14973125, PubMed:15152005, PubMed:15280030, PubMed:17593962, PubMed:21453287, PubMed:27927697, PubMed:30902677). Participates in the corticosteroid receptor-mediated anti-inflammatory response, as well as metabolic and homeostatic processes (PubMed:10497248, PubMed:12414862, PubMed:15152005, PubMed:21453287). Plays a role in the secretion of aqueous humor in the eye, maintaining a normotensive, intraocular environment (PubMed:11481269). Bidirectional in vitro, predominantly functions as a reductase in vivo, thereby increasing the concentration of active glucocorticoids (PubMed:10497248, PubMed:11481269, PubMed:12414862, PubMed:12460758). It has broad substrate specificity, besides glucocorticoids, it accepts other steroid and sterol substrates (PubMed:15095019, PubMed:15152005, PubMed:17593962, PubMed:21453287). Interconverts 7-oxo- and 7-hydroxy-neurosteroids such as 7-oxopregnenolone and 7beta-hydroxypregnenolone, 7-oxodehydroepiandrosterone (3beta-hydroxy-5-androstene-7,17-dione) and 7beta-hydroxydehydroepiandrosterone (3beta,7beta-dihydroxyandrost-5-en-17-one), among others (PubMed:17593962). Catalyzes the stereo-specific conversion of the major dietary oxysterol, 7-ketocholesterol (7-oxocholesterol), into the more polar 7-beta-hydroxycholesterol metabolite (PubMed:15095019, PubMed:15152005). 7-oxocholesterol is one of the most important oxysterols, it participates in several events such as induction of apoptosis, accumulation in atherosclerotic lesions, lipid peroxidation, and induction of foam cell formation (PubMed:15095019). Mediates the 7-oxo reduction of 7-oxolithocholate mainly to chenodeoxycholate, and to a lesser extent to ursodeoxycholate, both in its free form and when conjugated to glycine or taurine, providing a link between glucocorticoid activation and bile acid metabolism (PubMed:21453287). Catalyzes the synthesis of 7-beta-25-dihydroxycholesterol from 7-oxo-25-hydroxycholesterol in vitro, which acts as a ligand for the G-protein-coupled receptor (GPCR) Epstein-Barr virus-induced gene 2 (EBI2) and may thereby regulate immune cell migration (PubMed:30902677).</text>
</comment>
<comment type="catalytic activity">
    <reaction evidence="2 3 4 6 8 9 12 13 14 21 22 23 24">
        <text>an 11beta-hydroxysteroid + NADP(+) = an 11-oxosteroid + NADPH + H(+)</text>
        <dbReference type="Rhea" id="RHEA:11388"/>
        <dbReference type="ChEBI" id="CHEBI:15378"/>
        <dbReference type="ChEBI" id="CHEBI:35346"/>
        <dbReference type="ChEBI" id="CHEBI:47787"/>
        <dbReference type="ChEBI" id="CHEBI:57783"/>
        <dbReference type="ChEBI" id="CHEBI:58349"/>
        <dbReference type="EC" id="1.1.1.146"/>
    </reaction>
    <physiologicalReaction direction="left-to-right" evidence="2 4 6 8 21 23 24 35 36 37">
        <dbReference type="Rhea" id="RHEA:11389"/>
    </physiologicalReaction>
    <physiologicalReaction direction="right-to-left" evidence="2 3 4 6 8 21 23 24 35 36 37">
        <dbReference type="Rhea" id="RHEA:11390"/>
    </physiologicalReaction>
</comment>
<comment type="catalytic activity">
    <reaction evidence="3 4 8 9 13 21 22 23 24">
        <text>cortisone + NADPH + H(+) = cortisol + NADP(+)</text>
        <dbReference type="Rhea" id="RHEA:68616"/>
        <dbReference type="ChEBI" id="CHEBI:15378"/>
        <dbReference type="ChEBI" id="CHEBI:16962"/>
        <dbReference type="ChEBI" id="CHEBI:17650"/>
        <dbReference type="ChEBI" id="CHEBI:57783"/>
        <dbReference type="ChEBI" id="CHEBI:58349"/>
    </reaction>
    <physiologicalReaction direction="left-to-right" evidence="3 4 8 21 23 24 35 36 37">
        <dbReference type="Rhea" id="RHEA:68617"/>
    </physiologicalReaction>
    <physiologicalReaction direction="right-to-left" evidence="4 8 21 23 24 35 36 37">
        <dbReference type="Rhea" id="RHEA:68618"/>
    </physiologicalReaction>
</comment>
<comment type="catalytic activity">
    <reaction evidence="2 6">
        <text>corticosterone + NADP(+) = 11-dehydrocorticosterone + NADPH + H(+)</text>
        <dbReference type="Rhea" id="RHEA:42200"/>
        <dbReference type="ChEBI" id="CHEBI:15378"/>
        <dbReference type="ChEBI" id="CHEBI:16827"/>
        <dbReference type="ChEBI" id="CHEBI:57783"/>
        <dbReference type="ChEBI" id="CHEBI:58349"/>
        <dbReference type="ChEBI" id="CHEBI:78600"/>
    </reaction>
    <physiologicalReaction direction="left-to-right" evidence="2 6">
        <dbReference type="Rhea" id="RHEA:42201"/>
    </physiologicalReaction>
    <physiologicalReaction direction="right-to-left" evidence="2 6">
        <dbReference type="Rhea" id="RHEA:42202"/>
    </physiologicalReaction>
</comment>
<comment type="catalytic activity">
    <reaction evidence="6 7 8 13 21">
        <text>a 7beta-hydroxysteroid + NADP(+) = a 7-oxosteroid + NADPH + H(+)</text>
        <dbReference type="Rhea" id="RHEA:20233"/>
        <dbReference type="ChEBI" id="CHEBI:15378"/>
        <dbReference type="ChEBI" id="CHEBI:35349"/>
        <dbReference type="ChEBI" id="CHEBI:47789"/>
        <dbReference type="ChEBI" id="CHEBI:57783"/>
        <dbReference type="ChEBI" id="CHEBI:58349"/>
        <dbReference type="EC" id="1.1.1.201"/>
    </reaction>
    <physiologicalReaction direction="right-to-left" evidence="6 7 8 21 36">
        <dbReference type="Rhea" id="RHEA:20235"/>
    </physiologicalReaction>
</comment>
<comment type="catalytic activity">
    <reaction evidence="6 7 8">
        <text>7-oxocholesterol + NADPH + H(+) = 7beta-hydroxycholesterol + NADP(+)</text>
        <dbReference type="Rhea" id="RHEA:68656"/>
        <dbReference type="ChEBI" id="CHEBI:15378"/>
        <dbReference type="ChEBI" id="CHEBI:42989"/>
        <dbReference type="ChEBI" id="CHEBI:57783"/>
        <dbReference type="ChEBI" id="CHEBI:58349"/>
        <dbReference type="ChEBI" id="CHEBI:64294"/>
    </reaction>
    <physiologicalReaction direction="left-to-right" evidence="6 7 8">
        <dbReference type="Rhea" id="RHEA:68657"/>
    </physiologicalReaction>
</comment>
<comment type="catalytic activity">
    <reaction evidence="21">
        <text>chenodeoxycholate + NADP(+) = 7-oxolithocholate + NADPH + H(+)</text>
        <dbReference type="Rhea" id="RHEA:53820"/>
        <dbReference type="ChEBI" id="CHEBI:15378"/>
        <dbReference type="ChEBI" id="CHEBI:36234"/>
        <dbReference type="ChEBI" id="CHEBI:57783"/>
        <dbReference type="ChEBI" id="CHEBI:58349"/>
        <dbReference type="ChEBI" id="CHEBI:78605"/>
    </reaction>
    <physiologicalReaction direction="right-to-left" evidence="21">
        <dbReference type="Rhea" id="RHEA:53822"/>
    </physiologicalReaction>
</comment>
<comment type="catalytic activity">
    <reaction evidence="21">
        <text>7-oxolithocholate + NADPH + H(+) = ursodeoxycholate + NADP(+)</text>
        <dbReference type="Rhea" id="RHEA:47540"/>
        <dbReference type="ChEBI" id="CHEBI:15378"/>
        <dbReference type="ChEBI" id="CHEBI:57783"/>
        <dbReference type="ChEBI" id="CHEBI:58349"/>
        <dbReference type="ChEBI" id="CHEBI:78604"/>
        <dbReference type="ChEBI" id="CHEBI:78605"/>
    </reaction>
    <physiologicalReaction direction="left-to-right" evidence="21">
        <dbReference type="Rhea" id="RHEA:47541"/>
    </physiologicalReaction>
</comment>
<comment type="catalytic activity">
    <reaction evidence="21">
        <text>glycochenodeoxycholate + NADP(+) = 7-oxoglycolithocholate + NADPH + H(+)</text>
        <dbReference type="Rhea" id="RHEA:65056"/>
        <dbReference type="ChEBI" id="CHEBI:15378"/>
        <dbReference type="ChEBI" id="CHEBI:36252"/>
        <dbReference type="ChEBI" id="CHEBI:57783"/>
        <dbReference type="ChEBI" id="CHEBI:58349"/>
        <dbReference type="ChEBI" id="CHEBI:137818"/>
    </reaction>
    <physiologicalReaction direction="right-to-left" evidence="21">
        <dbReference type="Rhea" id="RHEA:65058"/>
    </physiologicalReaction>
</comment>
<comment type="catalytic activity">
    <reaction evidence="21">
        <text>taurochenodeoxycholate + NADP(+) = 7-oxotaurolithocholate + NADPH + H(+)</text>
        <dbReference type="Rhea" id="RHEA:65060"/>
        <dbReference type="ChEBI" id="CHEBI:9407"/>
        <dbReference type="ChEBI" id="CHEBI:15378"/>
        <dbReference type="ChEBI" id="CHEBI:57783"/>
        <dbReference type="ChEBI" id="CHEBI:58349"/>
        <dbReference type="ChEBI" id="CHEBI:137724"/>
    </reaction>
    <physiologicalReaction direction="right-to-left" evidence="21">
        <dbReference type="Rhea" id="RHEA:65062"/>
    </physiologicalReaction>
</comment>
<comment type="catalytic activity">
    <reaction evidence="21">
        <text>tauroursodeoxycholate + NADP(+) = 7-oxotaurolithocholate + NADPH + H(+)</text>
        <dbReference type="Rhea" id="RHEA:68980"/>
        <dbReference type="ChEBI" id="CHEBI:15378"/>
        <dbReference type="ChEBI" id="CHEBI:57783"/>
        <dbReference type="ChEBI" id="CHEBI:58349"/>
        <dbReference type="ChEBI" id="CHEBI:132028"/>
        <dbReference type="ChEBI" id="CHEBI:137724"/>
    </reaction>
    <physiologicalReaction direction="right-to-left" evidence="21">
        <dbReference type="Rhea" id="RHEA:68982"/>
    </physiologicalReaction>
</comment>
<comment type="catalytic activity">
    <reaction evidence="21">
        <text>glycoursodeoxycholate + NADP(+) = 7-oxoglycolithocholate + NADPH + H(+)</text>
        <dbReference type="Rhea" id="RHEA:68976"/>
        <dbReference type="ChEBI" id="CHEBI:15378"/>
        <dbReference type="ChEBI" id="CHEBI:57783"/>
        <dbReference type="ChEBI" id="CHEBI:58349"/>
        <dbReference type="ChEBI" id="CHEBI:132030"/>
        <dbReference type="ChEBI" id="CHEBI:137818"/>
    </reaction>
    <physiologicalReaction direction="right-to-left" evidence="21">
        <dbReference type="Rhea" id="RHEA:68978"/>
    </physiologicalReaction>
</comment>
<comment type="catalytic activity">
    <reaction evidence="13">
        <text>7-oxopregnenolone + NADPH + H(+) = 7beta-hydroxypregnenolone + NADP(+)</text>
        <dbReference type="Rhea" id="RHEA:69436"/>
        <dbReference type="ChEBI" id="CHEBI:15378"/>
        <dbReference type="ChEBI" id="CHEBI:57783"/>
        <dbReference type="ChEBI" id="CHEBI:58349"/>
        <dbReference type="ChEBI" id="CHEBI:183806"/>
        <dbReference type="ChEBI" id="CHEBI:183807"/>
    </reaction>
    <physiologicalReaction direction="left-to-right" evidence="36">
        <dbReference type="Rhea" id="RHEA:69437"/>
    </physiologicalReaction>
</comment>
<comment type="catalytic activity">
    <reaction evidence="13">
        <text>3beta,7alpha-dihydroxyandrost-5-en-17-one + NADP(+) = 3beta-hydroxy-5-androstene-7,17-dione + NADPH + H(+)</text>
        <dbReference type="Rhea" id="RHEA:69440"/>
        <dbReference type="ChEBI" id="CHEBI:15378"/>
        <dbReference type="ChEBI" id="CHEBI:57783"/>
        <dbReference type="ChEBI" id="CHEBI:58349"/>
        <dbReference type="ChEBI" id="CHEBI:81471"/>
        <dbReference type="ChEBI" id="CHEBI:183808"/>
    </reaction>
    <physiologicalReaction direction="left-to-right" evidence="36">
        <dbReference type="Rhea" id="RHEA:69441"/>
    </physiologicalReaction>
</comment>
<comment type="catalytic activity">
    <reaction evidence="13">
        <text>3beta-hydroxy-5-androstene-7,17-dione + NADPH + H(+) = 3beta,7beta-dihydroxyandrost-5-en-17-one + NADP(+)</text>
        <dbReference type="Rhea" id="RHEA:69452"/>
        <dbReference type="ChEBI" id="CHEBI:15378"/>
        <dbReference type="ChEBI" id="CHEBI:57783"/>
        <dbReference type="ChEBI" id="CHEBI:58349"/>
        <dbReference type="ChEBI" id="CHEBI:183368"/>
        <dbReference type="ChEBI" id="CHEBI:183808"/>
    </reaction>
    <physiologicalReaction direction="left-to-right" evidence="36">
        <dbReference type="Rhea" id="RHEA:69453"/>
    </physiologicalReaction>
</comment>
<comment type="catalytic activity">
    <reaction evidence="13">
        <text>3beta-hydroxy-5alpha-androstane-7,17-dione + NADPH + H(+) = 3beta,7beta-dihydroxy-5alpha-androstan-17-one + NADP(+)</text>
        <dbReference type="Rhea" id="RHEA:69456"/>
        <dbReference type="ChEBI" id="CHEBI:15378"/>
        <dbReference type="ChEBI" id="CHEBI:57783"/>
        <dbReference type="ChEBI" id="CHEBI:58349"/>
        <dbReference type="ChEBI" id="CHEBI:79834"/>
        <dbReference type="ChEBI" id="CHEBI:183809"/>
    </reaction>
    <physiologicalReaction direction="left-to-right" evidence="36">
        <dbReference type="Rhea" id="RHEA:69457"/>
    </physiologicalReaction>
</comment>
<comment type="activity regulation">
    <text evidence="9 13">Hexose-6-phosphate dehydrogenase (H6PD) provides cosubstrate NADPH, and the glucose-6-phosphate transporter in the ER-membrane supplies the substrate for H6PDH, their activities stimulate the reduction of cortisone and abolish the oxidation of cortisol.</text>
</comment>
<comment type="biophysicochemical properties">
    <kinetics>
        <KM evidence="2">163 nM for corticosterone</KM>
        <KM evidence="2 6">594 nM for 11-dehydrocorticosterone</KM>
        <KM evidence="6">165 nM for corticosterone</KM>
        <KM evidence="6">564 nM for 7-oxocholesterol</KM>
        <KM evidence="24">0.14 uM for cortisone</KM>
        <KM evidence="24">1.66 uM for cortisol</KM>
        <KM evidence="4">0.6 uM for cortisone</KM>
        <KM evidence="4">1.7 uM for cortisol</KM>
        <KM evidence="8">803 nM for cortisone</KM>
        <KM evidence="9">665 nM for cortisone</KM>
        <KM evidence="9">1093 nM for cortisol</KM>
        <KM evidence="8">826 nM for cortisol</KM>
        <KM evidence="21">980 nM for 7-oxolithocholate</KM>
        <Vmax evidence="2">0.42 nmol/min/mg enzyme with corticosterone as substrate</Vmax>
        <Vmax evidence="2 6">0.51 nmol/min/mg enzyme with 11-dehydrocorticosterone as substrate</Vmax>
        <Vmax evidence="6">0.45 nmol/min/mg enzyme with corticosterone as substrate</Vmax>
        <Vmax evidence="6">0.21 nmol/min/mg enzyme with 7-oxocholesterol as substrate</Vmax>
        <Vmax evidence="24">540.0 nmol/h/ug enzyme with cortisol as substrate</Vmax>
        <Vmax evidence="24">0.216 nmol/min/mg enzyme with cortisone as substrate</Vmax>
        <Vmax evidence="9">0.76 nmol/h/mg enzyme with cortisone as substrate</Vmax>
        <Vmax evidence="4">3.8 nmol/min/mg enzyme with cortisone as substrate</Vmax>
        <Vmax evidence="9">1.74 nmol/h/mg enzyme with cortisol as substrate</Vmax>
        <Vmax evidence="4">69.8 nmol/min/mg enzyme with cortisol as substrate</Vmax>
        <Vmax evidence="8">0.72 nmol/h/mg enzyme with cortisone as substrate</Vmax>
        <Vmax evidence="23">1.59 nmol/h/mg enzyme with cortisone as substrate</Vmax>
        <Vmax evidence="8">0.64 nmol/h/mg enzyme with cortisol as substrate</Vmax>
        <Vmax evidence="21">2.8 nmol/h/mg enzyme with 7-oxolithocholate as substrate</Vmax>
    </kinetics>
</comment>
<comment type="pathway">
    <text evidence="34">Steroid metabolism.</text>
</comment>
<comment type="subunit">
    <text evidence="10 14 15 16 17 20">Homodimer.</text>
</comment>
<comment type="subcellular location">
    <subcellularLocation>
        <location evidence="2 9">Endoplasmic reticulum membrane</location>
        <topology evidence="2">Single-pass type II membrane protein</topology>
    </subcellularLocation>
</comment>
<comment type="tissue specificity">
    <text evidence="3 18 21">Widely expressed, highest expression in liver, lower in testis, ovary, lung, foreskin fibroblasts, and much lower in kidney (PubMed:1885595). Expressed in liver (at protein level) (PubMed:21453287). Expressed in the basal cells of the corneal epithelium and in the ciliary nonpigmented epithelium (both at mRNA and at protein level) (PubMed:11481269).</text>
</comment>
<comment type="PTM">
    <text evidence="2 19">Glycosylated.</text>
</comment>
<comment type="disease" evidence="5">
    <disease id="DI-05184">
        <name>Cortisone reductase deficiency 2</name>
        <acronym>CORTRD2</acronym>
        <description>An autosomal dominant error of cortisone metabolism characterized by a failure to regenerate cortisol from cortisone, resulting in increased cortisol clearance, activation of the hypothalamic- pituitary axis and ACTH-mediated adrenal androgen excess. Clinical features include hyperandrogenism resulting in hirsutism, oligo- amenorrhea, and infertility in females and premature pseudopuberty in males.</description>
        <dbReference type="MIM" id="614662"/>
    </disease>
    <text>The disease is caused by variants affecting the gene represented in this entry.</text>
</comment>
<comment type="similarity">
    <text evidence="34">Belongs to the short-chain dehydrogenases/reductases (SDR) family.</text>
</comment>
<protein>
    <recommendedName>
        <fullName evidence="25 29">11-beta-hydroxysteroid dehydrogenase 1</fullName>
        <shortName>11-DH</shortName>
        <shortName evidence="25 29 33">11-beta-HSD1</shortName>
        <ecNumber evidence="2 4 6 8 21 23 24">1.1.1.146</ecNumber>
    </recommendedName>
    <alternativeName>
        <fullName>7-oxosteroid reductase</fullName>
        <ecNumber evidence="6 7 8 13 21">1.1.1.201</ecNumber>
    </alternativeName>
    <alternativeName>
        <fullName evidence="34">Corticosteroid 11-beta-dehydrogenase isozyme 1</fullName>
    </alternativeName>
    <alternativeName>
        <fullName>Short chain dehydrogenase/reductase family 26C member 1</fullName>
    </alternativeName>
</protein>
<evidence type="ECO:0000255" key="1"/>
<evidence type="ECO:0000269" key="2">
    <source>
    </source>
</evidence>
<evidence type="ECO:0000269" key="3">
    <source>
    </source>
</evidence>
<evidence type="ECO:0000269" key="4">
    <source>
    </source>
</evidence>
<evidence type="ECO:0000269" key="5">
    <source>
    </source>
</evidence>
<evidence type="ECO:0000269" key="6">
    <source>
    </source>
</evidence>
<evidence type="ECO:0000269" key="7">
    <source>
    </source>
</evidence>
<evidence type="ECO:0000269" key="8">
    <source>
    </source>
</evidence>
<evidence type="ECO:0000269" key="9">
    <source>
    </source>
</evidence>
<evidence type="ECO:0000269" key="10">
    <source>
    </source>
</evidence>
<evidence type="ECO:0000269" key="11">
    <source>
    </source>
</evidence>
<evidence type="ECO:0000269" key="12">
    <source>
    </source>
</evidence>
<evidence type="ECO:0000269" key="13">
    <source>
    </source>
</evidence>
<evidence type="ECO:0000269" key="14">
    <source>
    </source>
</evidence>
<evidence type="ECO:0000269" key="15">
    <source>
    </source>
</evidence>
<evidence type="ECO:0000269" key="16">
    <source>
    </source>
</evidence>
<evidence type="ECO:0000269" key="17">
    <source>
    </source>
</evidence>
<evidence type="ECO:0000269" key="18">
    <source>
    </source>
</evidence>
<evidence type="ECO:0000269" key="19">
    <source>
    </source>
</evidence>
<evidence type="ECO:0000269" key="20">
    <source>
    </source>
</evidence>
<evidence type="ECO:0000269" key="21">
    <source>
    </source>
</evidence>
<evidence type="ECO:0000269" key="22">
    <source>
    </source>
</evidence>
<evidence type="ECO:0000269" key="23">
    <source>
    </source>
</evidence>
<evidence type="ECO:0000269" key="24">
    <source>
    </source>
</evidence>
<evidence type="ECO:0000303" key="25">
    <source>
    </source>
</evidence>
<evidence type="ECO:0000303" key="26">
    <source>
    </source>
</evidence>
<evidence type="ECO:0000303" key="27">
    <source>
    </source>
</evidence>
<evidence type="ECO:0000303" key="28">
    <source>
    </source>
</evidence>
<evidence type="ECO:0000303" key="29">
    <source>
    </source>
</evidence>
<evidence type="ECO:0000303" key="30">
    <source>
    </source>
</evidence>
<evidence type="ECO:0000303" key="31">
    <source>
    </source>
</evidence>
<evidence type="ECO:0000303" key="32">
    <source>
    </source>
</evidence>
<evidence type="ECO:0000303" key="33">
    <source>
    </source>
</evidence>
<evidence type="ECO:0000305" key="34"/>
<evidence type="ECO:0000305" key="35">
    <source>
    </source>
</evidence>
<evidence type="ECO:0000305" key="36">
    <source>
    </source>
</evidence>
<evidence type="ECO:0000305" key="37">
    <source>
    </source>
</evidence>
<evidence type="ECO:0000312" key="38">
    <source>
        <dbReference type="HGNC" id="HGNC:5208"/>
    </source>
</evidence>
<evidence type="ECO:0000312" key="39">
    <source>
        <dbReference type="PDB" id="1XU7"/>
    </source>
</evidence>
<evidence type="ECO:0000312" key="40">
    <source>
        <dbReference type="PDB" id="1XU9"/>
    </source>
</evidence>
<evidence type="ECO:0007744" key="41">
    <source>
        <dbReference type="PDB" id="1XU7"/>
    </source>
</evidence>
<evidence type="ECO:0007744" key="42">
    <source>
        <dbReference type="PDB" id="1XU9"/>
    </source>
</evidence>
<evidence type="ECO:0007829" key="43">
    <source>
        <dbReference type="PDB" id="1XU9"/>
    </source>
</evidence>
<evidence type="ECO:0007829" key="44">
    <source>
        <dbReference type="PDB" id="4C7J"/>
    </source>
</evidence>
<evidence type="ECO:0007829" key="45">
    <source>
        <dbReference type="PDB" id="4YYZ"/>
    </source>
</evidence>
<accession>P28845</accession>
<accession>B2R9Z1</accession>
<accession>D3DT89</accession>
<gene>
    <name evidence="38" type="primary">HSD11B1</name>
    <name type="synonym">HSD11</name>
    <name type="synonym">HSD11L</name>
    <name type="synonym">SDR26C1</name>
</gene>
<feature type="chain" id="PRO_0000054619" description="11-beta-hydroxysteroid dehydrogenase 1">
    <location>
        <begin position="1"/>
        <end position="292"/>
    </location>
</feature>
<feature type="topological domain" description="Cytoplasmic" evidence="1">
    <location>
        <begin position="1"/>
        <end position="7"/>
    </location>
</feature>
<feature type="transmembrane region" description="Helical; Signal-anchor for type II membrane protein" evidence="1">
    <location>
        <begin position="8"/>
        <end position="24"/>
    </location>
</feature>
<feature type="topological domain" description="Lumenal" evidence="1">
    <location>
        <begin position="25"/>
        <end position="292"/>
    </location>
</feature>
<feature type="active site" description="Proton acceptor">
    <location>
        <position position="183"/>
    </location>
</feature>
<feature type="binding site" evidence="10 14 15 16 17 20">
    <location>
        <begin position="41"/>
        <end position="67"/>
    </location>
    <ligand>
        <name>NADP(+)</name>
        <dbReference type="ChEBI" id="CHEBI:58349"/>
    </ligand>
</feature>
<feature type="binding site" evidence="10 14 15 16 17 20">
    <location>
        <begin position="92"/>
        <end position="93"/>
    </location>
    <ligand>
        <name>NADP(+)</name>
        <dbReference type="ChEBI" id="CHEBI:58349"/>
    </ligand>
</feature>
<feature type="binding site" evidence="10 14 15 16 17 20">
    <location>
        <begin position="119"/>
        <end position="121"/>
    </location>
    <ligand>
        <name>NADP(+)</name>
        <dbReference type="ChEBI" id="CHEBI:58349"/>
    </ligand>
</feature>
<feature type="binding site" evidence="10 41 42">
    <location>
        <position position="170"/>
    </location>
    <ligand>
        <name>substrate</name>
    </ligand>
</feature>
<feature type="binding site" evidence="10 14 15 16 17 20">
    <location>
        <begin position="183"/>
        <end position="187"/>
    </location>
    <ligand>
        <name>NADP(+)</name>
        <dbReference type="ChEBI" id="CHEBI:58349"/>
    </ligand>
</feature>
<feature type="binding site" evidence="10 14 15 16 17 20">
    <location>
        <begin position="218"/>
        <end position="222"/>
    </location>
    <ligand>
        <name>NADP(+)</name>
        <dbReference type="ChEBI" id="CHEBI:58349"/>
    </ligand>
</feature>
<feature type="glycosylation site" description="N-linked (GlcNAc...) asparagine" evidence="19">
    <location>
        <position position="123"/>
    </location>
</feature>
<feature type="glycosylation site" description="N-linked (GlcNAc...) asparagine" evidence="19">
    <location>
        <position position="162"/>
    </location>
</feature>
<feature type="glycosylation site" description="N-linked (GlcNAc...) asparagine" evidence="1">
    <location>
        <position position="207"/>
    </location>
</feature>
<feature type="sequence variant" id="VAR_035845" description="In a breast cancer sample; somatic mutation." evidence="11">
    <original>V</original>
    <variation>E</variation>
    <location>
        <position position="148"/>
    </location>
</feature>
<feature type="mutagenesis site" description="Predominantly inverted topology. No effect on activity." evidence="2 8">
    <original>KK</original>
    <variation>RR</variation>
    <location>
        <begin position="5"/>
        <end position="6"/>
    </location>
</feature>
<feature type="mutagenesis site" description="Inverted topology. Reduced Vmax." evidence="2 8">
    <original>KK</original>
    <variation>SS</variation>
    <location>
        <begin position="5"/>
        <end position="6"/>
    </location>
</feature>
<feature type="mutagenesis site" description="Predominantly inverted topology. No effect on activity." evidence="2">
    <original>K</original>
    <variation>R</variation>
    <location>
        <position position="5"/>
    </location>
</feature>
<feature type="mutagenesis site" description="Inverted topology. No effect on activity." evidence="2">
    <original>K</original>
    <variation>S</variation>
    <location>
        <position position="5"/>
    </location>
</feature>
<feature type="mutagenesis site" description="No effect on topology. Increased Km for corticosterone." evidence="2">
    <original>K</original>
    <variation>R</variation>
    <location>
        <position position="6"/>
    </location>
</feature>
<feature type="mutagenesis site" description="No effect on topology or activity." evidence="2">
    <original>K</original>
    <variation>S</variation>
    <location>
        <position position="6"/>
    </location>
</feature>
<feature type="mutagenesis site" description="No effect on topology. Reduced Vmax." evidence="2">
    <original>YYYY</original>
    <variation>AAAA</variation>
    <location>
        <begin position="18"/>
        <end position="21"/>
    </location>
</feature>
<feature type="mutagenesis site" description="No effect on topology or activity." evidence="2">
    <original>YYYY</original>
    <variation>FFFF</variation>
    <location>
        <begin position="18"/>
        <end position="21"/>
    </location>
</feature>
<feature type="mutagenesis site" description="No effect on topology. Reduced Vmax." evidence="2">
    <original>YYY</original>
    <variation>AYA</variation>
    <location>
        <begin position="19"/>
        <end position="21"/>
    </location>
</feature>
<feature type="mutagenesis site" description="Inverted topology. Reduced Vmax." evidence="8">
    <original>EE</original>
    <variation>KK</variation>
    <location>
        <begin position="25"/>
        <end position="26"/>
    </location>
</feature>
<feature type="mutagenesis site" description="No effect on topology. Reduced Vmax." evidence="8">
    <original>EE</original>
    <variation>KQ</variation>
    <location>
        <begin position="25"/>
        <end position="26"/>
    </location>
</feature>
<feature type="mutagenesis site" description="Reduced Vmax." evidence="8">
    <original>EE</original>
    <variation>QQ</variation>
    <location>
        <begin position="25"/>
        <end position="26"/>
    </location>
</feature>
<feature type="mutagenesis site" description="No effect on activity." evidence="8">
    <original>E</original>
    <variation>K</variation>
    <variation>Q</variation>
    <location>
        <position position="25"/>
    </location>
</feature>
<feature type="mutagenesis site" description="No effect on activity." evidence="8">
    <original>E</original>
    <variation>K</variation>
    <location>
        <position position="26"/>
    </location>
</feature>
<feature type="mutagenesis site" description="Complete loss of activity." evidence="8">
    <original>KK</original>
    <variation>SS</variation>
    <location>
        <begin position="35"/>
        <end position="36"/>
    </location>
</feature>
<feature type="helix" evidence="43">
    <location>
        <begin position="29"/>
        <end position="32"/>
    </location>
</feature>
<feature type="strand" evidence="43">
    <location>
        <begin position="36"/>
        <end position="41"/>
    </location>
</feature>
<feature type="helix" evidence="43">
    <location>
        <begin position="45"/>
        <end position="56"/>
    </location>
</feature>
<feature type="strand" evidence="43">
    <location>
        <begin position="60"/>
        <end position="66"/>
    </location>
</feature>
<feature type="helix" evidence="43">
    <location>
        <begin position="68"/>
        <end position="81"/>
    </location>
</feature>
<feature type="strand" evidence="43">
    <location>
        <begin position="84"/>
        <end position="90"/>
    </location>
</feature>
<feature type="strand" evidence="45">
    <location>
        <begin position="93"/>
        <end position="95"/>
    </location>
</feature>
<feature type="helix" evidence="43">
    <location>
        <begin position="96"/>
        <end position="110"/>
    </location>
</feature>
<feature type="strand" evidence="43">
    <location>
        <begin position="114"/>
        <end position="118"/>
    </location>
</feature>
<feature type="helix" evidence="43">
    <location>
        <begin position="133"/>
        <end position="143"/>
    </location>
</feature>
<feature type="helix" evidence="43">
    <location>
        <begin position="145"/>
        <end position="161"/>
    </location>
</feature>
<feature type="strand" evidence="43">
    <location>
        <begin position="164"/>
        <end position="170"/>
    </location>
</feature>
<feature type="helix" evidence="43">
    <location>
        <begin position="171"/>
        <end position="173"/>
    </location>
</feature>
<feature type="helix" evidence="43">
    <location>
        <begin position="181"/>
        <end position="204"/>
    </location>
</feature>
<feature type="strand" evidence="43">
    <location>
        <begin position="209"/>
        <end position="215"/>
    </location>
</feature>
<feature type="helix" evidence="43">
    <location>
        <begin position="221"/>
        <end position="226"/>
    </location>
</feature>
<feature type="helix" evidence="43">
    <location>
        <begin position="229"/>
        <end position="234"/>
    </location>
</feature>
<feature type="helix" evidence="43">
    <location>
        <begin position="238"/>
        <end position="250"/>
    </location>
</feature>
<feature type="strand" evidence="43">
    <location>
        <begin position="254"/>
        <end position="258"/>
    </location>
</feature>
<feature type="helix" evidence="43">
    <location>
        <begin position="262"/>
        <end position="267"/>
    </location>
</feature>
<feature type="helix" evidence="43">
    <location>
        <begin position="271"/>
        <end position="280"/>
    </location>
</feature>
<feature type="helix" evidence="43">
    <location>
        <begin position="281"/>
        <end position="283"/>
    </location>
</feature>
<feature type="helix" evidence="44">
    <location>
        <begin position="287"/>
        <end position="290"/>
    </location>
</feature>
<organism>
    <name type="scientific">Homo sapiens</name>
    <name type="common">Human</name>
    <dbReference type="NCBI Taxonomy" id="9606"/>
    <lineage>
        <taxon>Eukaryota</taxon>
        <taxon>Metazoa</taxon>
        <taxon>Chordata</taxon>
        <taxon>Craniata</taxon>
        <taxon>Vertebrata</taxon>
        <taxon>Euteleostomi</taxon>
        <taxon>Mammalia</taxon>
        <taxon>Eutheria</taxon>
        <taxon>Euarchontoglires</taxon>
        <taxon>Primates</taxon>
        <taxon>Haplorrhini</taxon>
        <taxon>Catarrhini</taxon>
        <taxon>Hominidae</taxon>
        <taxon>Homo</taxon>
    </lineage>
</organism>
<reference key="1">
    <citation type="journal article" date="1991" name="J. Biol. Chem.">
        <title>The human gene for 11 beta-hydroxysteroid dehydrogenase. Structure, tissue distribution, and chromosomal localization.</title>
        <authorList>
            <person name="Tannin G.M."/>
            <person name="Agarwal A.K."/>
            <person name="Monder C."/>
            <person name="New M.I."/>
            <person name="White P.C."/>
        </authorList>
    </citation>
    <scope>NUCLEOTIDE SEQUENCE [GENOMIC DNA]</scope>
    <scope>TISSUE SPECIFICITY</scope>
    <source>
        <tissue>Testis</tissue>
    </source>
</reference>
<reference key="2">
    <citation type="journal article" date="2002" name="J. Clin. Endocrinol. Metab.">
        <title>Association studies between microsatellite markers within the gene encoding human 11beta-hydroxysteroid dehydrogenase type 1 and body mass index, waist to hip ratio, and glucocorticoid metabolism.</title>
        <authorList>
            <person name="Draper N."/>
            <person name="Echwald S.M."/>
            <person name="Lavery G.G."/>
            <person name="Walker E.A."/>
            <person name="Fraser R."/>
            <person name="Davies E."/>
            <person name="Soerensen T.I.A."/>
            <person name="Astrup A."/>
            <person name="Adamski J."/>
            <person name="Hewison M."/>
            <person name="Connell J.M."/>
            <person name="Pedersen O."/>
            <person name="Stewart P.M."/>
        </authorList>
    </citation>
    <scope>NUCLEOTIDE SEQUENCE [GENOMIC DNA]</scope>
    <scope>FUNCTION</scope>
</reference>
<reference key="3">
    <citation type="journal article" date="2004" name="Nat. Genet.">
        <title>Complete sequencing and characterization of 21,243 full-length human cDNAs.</title>
        <authorList>
            <person name="Ota T."/>
            <person name="Suzuki Y."/>
            <person name="Nishikawa T."/>
            <person name="Otsuki T."/>
            <person name="Sugiyama T."/>
            <person name="Irie R."/>
            <person name="Wakamatsu A."/>
            <person name="Hayashi K."/>
            <person name="Sato H."/>
            <person name="Nagai K."/>
            <person name="Kimura K."/>
            <person name="Makita H."/>
            <person name="Sekine M."/>
            <person name="Obayashi M."/>
            <person name="Nishi T."/>
            <person name="Shibahara T."/>
            <person name="Tanaka T."/>
            <person name="Ishii S."/>
            <person name="Yamamoto J."/>
            <person name="Saito K."/>
            <person name="Kawai Y."/>
            <person name="Isono Y."/>
            <person name="Nakamura Y."/>
            <person name="Nagahari K."/>
            <person name="Murakami K."/>
            <person name="Yasuda T."/>
            <person name="Iwayanagi T."/>
            <person name="Wagatsuma M."/>
            <person name="Shiratori A."/>
            <person name="Sudo H."/>
            <person name="Hosoiri T."/>
            <person name="Kaku Y."/>
            <person name="Kodaira H."/>
            <person name="Kondo H."/>
            <person name="Sugawara M."/>
            <person name="Takahashi M."/>
            <person name="Kanda K."/>
            <person name="Yokoi T."/>
            <person name="Furuya T."/>
            <person name="Kikkawa E."/>
            <person name="Omura Y."/>
            <person name="Abe K."/>
            <person name="Kamihara K."/>
            <person name="Katsuta N."/>
            <person name="Sato K."/>
            <person name="Tanikawa M."/>
            <person name="Yamazaki M."/>
            <person name="Ninomiya K."/>
            <person name="Ishibashi T."/>
            <person name="Yamashita H."/>
            <person name="Murakawa K."/>
            <person name="Fujimori K."/>
            <person name="Tanai H."/>
            <person name="Kimata M."/>
            <person name="Watanabe M."/>
            <person name="Hiraoka S."/>
            <person name="Chiba Y."/>
            <person name="Ishida S."/>
            <person name="Ono Y."/>
            <person name="Takiguchi S."/>
            <person name="Watanabe S."/>
            <person name="Yosida M."/>
            <person name="Hotuta T."/>
            <person name="Kusano J."/>
            <person name="Kanehori K."/>
            <person name="Takahashi-Fujii A."/>
            <person name="Hara H."/>
            <person name="Tanase T.-O."/>
            <person name="Nomura Y."/>
            <person name="Togiya S."/>
            <person name="Komai F."/>
            <person name="Hara R."/>
            <person name="Takeuchi K."/>
            <person name="Arita M."/>
            <person name="Imose N."/>
            <person name="Musashino K."/>
            <person name="Yuuki H."/>
            <person name="Oshima A."/>
            <person name="Sasaki N."/>
            <person name="Aotsuka S."/>
            <person name="Yoshikawa Y."/>
            <person name="Matsunawa H."/>
            <person name="Ichihara T."/>
            <person name="Shiohata N."/>
            <person name="Sano S."/>
            <person name="Moriya S."/>
            <person name="Momiyama H."/>
            <person name="Satoh N."/>
            <person name="Takami S."/>
            <person name="Terashima Y."/>
            <person name="Suzuki O."/>
            <person name="Nakagawa S."/>
            <person name="Senoh A."/>
            <person name="Mizoguchi H."/>
            <person name="Goto Y."/>
            <person name="Shimizu F."/>
            <person name="Wakebe H."/>
            <person name="Hishigaki H."/>
            <person name="Watanabe T."/>
            <person name="Sugiyama A."/>
            <person name="Takemoto M."/>
            <person name="Kawakami B."/>
            <person name="Yamazaki M."/>
            <person name="Watanabe K."/>
            <person name="Kumagai A."/>
            <person name="Itakura S."/>
            <person name="Fukuzumi Y."/>
            <person name="Fujimori Y."/>
            <person name="Komiyama M."/>
            <person name="Tashiro H."/>
            <person name="Tanigami A."/>
            <person name="Fujiwara T."/>
            <person name="Ono T."/>
            <person name="Yamada K."/>
            <person name="Fujii Y."/>
            <person name="Ozaki K."/>
            <person name="Hirao M."/>
            <person name="Ohmori Y."/>
            <person name="Kawabata A."/>
            <person name="Hikiji T."/>
            <person name="Kobatake N."/>
            <person name="Inagaki H."/>
            <person name="Ikema Y."/>
            <person name="Okamoto S."/>
            <person name="Okitani R."/>
            <person name="Kawakami T."/>
            <person name="Noguchi S."/>
            <person name="Itoh T."/>
            <person name="Shigeta K."/>
            <person name="Senba T."/>
            <person name="Matsumura K."/>
            <person name="Nakajima Y."/>
            <person name="Mizuno T."/>
            <person name="Morinaga M."/>
            <person name="Sasaki M."/>
            <person name="Togashi T."/>
            <person name="Oyama M."/>
            <person name="Hata H."/>
            <person name="Watanabe M."/>
            <person name="Komatsu T."/>
            <person name="Mizushima-Sugano J."/>
            <person name="Satoh T."/>
            <person name="Shirai Y."/>
            <person name="Takahashi Y."/>
            <person name="Nakagawa K."/>
            <person name="Okumura K."/>
            <person name="Nagase T."/>
            <person name="Nomura N."/>
            <person name="Kikuchi H."/>
            <person name="Masuho Y."/>
            <person name="Yamashita R."/>
            <person name="Nakai K."/>
            <person name="Yada T."/>
            <person name="Nakamura Y."/>
            <person name="Ohara O."/>
            <person name="Isogai T."/>
            <person name="Sugano S."/>
        </authorList>
    </citation>
    <scope>NUCLEOTIDE SEQUENCE [LARGE SCALE MRNA]</scope>
    <source>
        <tissue>Liver</tissue>
    </source>
</reference>
<reference key="4">
    <citation type="journal article" date="2006" name="Nature">
        <title>The DNA sequence and biological annotation of human chromosome 1.</title>
        <authorList>
            <person name="Gregory S.G."/>
            <person name="Barlow K.F."/>
            <person name="McLay K.E."/>
            <person name="Kaul R."/>
            <person name="Swarbreck D."/>
            <person name="Dunham A."/>
            <person name="Scott C.E."/>
            <person name="Howe K.L."/>
            <person name="Woodfine K."/>
            <person name="Spencer C.C.A."/>
            <person name="Jones M.C."/>
            <person name="Gillson C."/>
            <person name="Searle S."/>
            <person name="Zhou Y."/>
            <person name="Kokocinski F."/>
            <person name="McDonald L."/>
            <person name="Evans R."/>
            <person name="Phillips K."/>
            <person name="Atkinson A."/>
            <person name="Cooper R."/>
            <person name="Jones C."/>
            <person name="Hall R.E."/>
            <person name="Andrews T.D."/>
            <person name="Lloyd C."/>
            <person name="Ainscough R."/>
            <person name="Almeida J.P."/>
            <person name="Ambrose K.D."/>
            <person name="Anderson F."/>
            <person name="Andrew R.W."/>
            <person name="Ashwell R.I.S."/>
            <person name="Aubin K."/>
            <person name="Babbage A.K."/>
            <person name="Bagguley C.L."/>
            <person name="Bailey J."/>
            <person name="Beasley H."/>
            <person name="Bethel G."/>
            <person name="Bird C.P."/>
            <person name="Bray-Allen S."/>
            <person name="Brown J.Y."/>
            <person name="Brown A.J."/>
            <person name="Buckley D."/>
            <person name="Burton J."/>
            <person name="Bye J."/>
            <person name="Carder C."/>
            <person name="Chapman J.C."/>
            <person name="Clark S.Y."/>
            <person name="Clarke G."/>
            <person name="Clee C."/>
            <person name="Cobley V."/>
            <person name="Collier R.E."/>
            <person name="Corby N."/>
            <person name="Coville G.J."/>
            <person name="Davies J."/>
            <person name="Deadman R."/>
            <person name="Dunn M."/>
            <person name="Earthrowl M."/>
            <person name="Ellington A.G."/>
            <person name="Errington H."/>
            <person name="Frankish A."/>
            <person name="Frankland J."/>
            <person name="French L."/>
            <person name="Garner P."/>
            <person name="Garnett J."/>
            <person name="Gay L."/>
            <person name="Ghori M.R.J."/>
            <person name="Gibson R."/>
            <person name="Gilby L.M."/>
            <person name="Gillett W."/>
            <person name="Glithero R.J."/>
            <person name="Grafham D.V."/>
            <person name="Griffiths C."/>
            <person name="Griffiths-Jones S."/>
            <person name="Grocock R."/>
            <person name="Hammond S."/>
            <person name="Harrison E.S.I."/>
            <person name="Hart E."/>
            <person name="Haugen E."/>
            <person name="Heath P.D."/>
            <person name="Holmes S."/>
            <person name="Holt K."/>
            <person name="Howden P.J."/>
            <person name="Hunt A.R."/>
            <person name="Hunt S.E."/>
            <person name="Hunter G."/>
            <person name="Isherwood J."/>
            <person name="James R."/>
            <person name="Johnson C."/>
            <person name="Johnson D."/>
            <person name="Joy A."/>
            <person name="Kay M."/>
            <person name="Kershaw J.K."/>
            <person name="Kibukawa M."/>
            <person name="Kimberley A.M."/>
            <person name="King A."/>
            <person name="Knights A.J."/>
            <person name="Lad H."/>
            <person name="Laird G."/>
            <person name="Lawlor S."/>
            <person name="Leongamornlert D.A."/>
            <person name="Lloyd D.M."/>
            <person name="Loveland J."/>
            <person name="Lovell J."/>
            <person name="Lush M.J."/>
            <person name="Lyne R."/>
            <person name="Martin S."/>
            <person name="Mashreghi-Mohammadi M."/>
            <person name="Matthews L."/>
            <person name="Matthews N.S.W."/>
            <person name="McLaren S."/>
            <person name="Milne S."/>
            <person name="Mistry S."/>
            <person name="Moore M.J.F."/>
            <person name="Nickerson T."/>
            <person name="O'Dell C.N."/>
            <person name="Oliver K."/>
            <person name="Palmeiri A."/>
            <person name="Palmer S.A."/>
            <person name="Parker A."/>
            <person name="Patel D."/>
            <person name="Pearce A.V."/>
            <person name="Peck A.I."/>
            <person name="Pelan S."/>
            <person name="Phelps K."/>
            <person name="Phillimore B.J."/>
            <person name="Plumb R."/>
            <person name="Rajan J."/>
            <person name="Raymond C."/>
            <person name="Rouse G."/>
            <person name="Saenphimmachak C."/>
            <person name="Sehra H.K."/>
            <person name="Sheridan E."/>
            <person name="Shownkeen R."/>
            <person name="Sims S."/>
            <person name="Skuce C.D."/>
            <person name="Smith M."/>
            <person name="Steward C."/>
            <person name="Subramanian S."/>
            <person name="Sycamore N."/>
            <person name="Tracey A."/>
            <person name="Tromans A."/>
            <person name="Van Helmond Z."/>
            <person name="Wall M."/>
            <person name="Wallis J.M."/>
            <person name="White S."/>
            <person name="Whitehead S.L."/>
            <person name="Wilkinson J.E."/>
            <person name="Willey D.L."/>
            <person name="Williams H."/>
            <person name="Wilming L."/>
            <person name="Wray P.W."/>
            <person name="Wu Z."/>
            <person name="Coulson A."/>
            <person name="Vaudin M."/>
            <person name="Sulston J.E."/>
            <person name="Durbin R.M."/>
            <person name="Hubbard T."/>
            <person name="Wooster R."/>
            <person name="Dunham I."/>
            <person name="Carter N.P."/>
            <person name="McVean G."/>
            <person name="Ross M.T."/>
            <person name="Harrow J."/>
            <person name="Olson M.V."/>
            <person name="Beck S."/>
            <person name="Rogers J."/>
            <person name="Bentley D.R."/>
        </authorList>
    </citation>
    <scope>NUCLEOTIDE SEQUENCE [LARGE SCALE GENOMIC DNA]</scope>
</reference>
<reference key="5">
    <citation type="submission" date="2005-09" db="EMBL/GenBank/DDBJ databases">
        <authorList>
            <person name="Mural R.J."/>
            <person name="Istrail S."/>
            <person name="Sutton G.G."/>
            <person name="Florea L."/>
            <person name="Halpern A.L."/>
            <person name="Mobarry C.M."/>
            <person name="Lippert R."/>
            <person name="Walenz B."/>
            <person name="Shatkay H."/>
            <person name="Dew I."/>
            <person name="Miller J.R."/>
            <person name="Flanigan M.J."/>
            <person name="Edwards N.J."/>
            <person name="Bolanos R."/>
            <person name="Fasulo D."/>
            <person name="Halldorsson B.V."/>
            <person name="Hannenhalli S."/>
            <person name="Turner R."/>
            <person name="Yooseph S."/>
            <person name="Lu F."/>
            <person name="Nusskern D.R."/>
            <person name="Shue B.C."/>
            <person name="Zheng X.H."/>
            <person name="Zhong F."/>
            <person name="Delcher A.L."/>
            <person name="Huson D.H."/>
            <person name="Kravitz S.A."/>
            <person name="Mouchard L."/>
            <person name="Reinert K."/>
            <person name="Remington K.A."/>
            <person name="Clark A.G."/>
            <person name="Waterman M.S."/>
            <person name="Eichler E.E."/>
            <person name="Adams M.D."/>
            <person name="Hunkapiller M.W."/>
            <person name="Myers E.W."/>
            <person name="Venter J.C."/>
        </authorList>
    </citation>
    <scope>NUCLEOTIDE SEQUENCE [LARGE SCALE GENOMIC DNA]</scope>
</reference>
<reference key="6">
    <citation type="journal article" date="2004" name="Genome Res.">
        <title>The status, quality, and expansion of the NIH full-length cDNA project: the Mammalian Gene Collection (MGC).</title>
        <authorList>
            <consortium name="The MGC Project Team"/>
        </authorList>
    </citation>
    <scope>NUCLEOTIDE SEQUENCE [LARGE SCALE MRNA]</scope>
    <source>
        <tissue>Brain</tissue>
    </source>
</reference>
<reference key="7">
    <citation type="journal article" date="1993" name="Endocrinology">
        <title>Structure and function of the hepatic form of 11 beta-hydroxysteroid dehydrogenase in the squirrel monkey, an animal model of glucocorticoid resistance.</title>
        <authorList>
            <person name="Moore C.C."/>
            <person name="Mellon S.H."/>
            <person name="Murai J."/>
            <person name="Siiteri P.K."/>
            <person name="Miller W.L."/>
        </authorList>
    </citation>
    <scope>CATALYTIC ACTIVITY</scope>
    <scope>BIOPHYSICOCHEMICAL PROPERTIES</scope>
</reference>
<reference key="8">
    <citation type="journal article" date="1999" name="J. Biol. Chem.">
        <title>The N-terminal anchor sequences of 11beta-hydroxysteroid dehydrogenases determine their orientation in the endoplasmic reticulum membrane.</title>
        <authorList>
            <person name="Odermatt A."/>
            <person name="Arnold P."/>
            <person name="Stauffer A."/>
            <person name="Frey B.M."/>
            <person name="Frey F.J."/>
        </authorList>
    </citation>
    <scope>FUNCTION</scope>
    <scope>CATALYTIC ACTIVITY</scope>
    <scope>BIOPHYSICOCHEMICAL PROPERTIES</scope>
    <scope>SUBCELLULAR LOCATION</scope>
    <scope>TOPOLOGY</scope>
    <scope>GLYCOSYLATION</scope>
    <scope>MUTAGENESIS OF LYS-5; 5-LYS-LYS-6; LYS-6; 18-TYR--TYR-21 AND 19-TYR--TYR-21</scope>
</reference>
<reference key="9">
    <citation type="journal article" date="2001" name="Invest. Ophthalmol. Vis. Sci.">
        <title>Expression and putative role of 11 beta-hydroxysteroid dehydrogenase isozymes within the human eye.</title>
        <authorList>
            <person name="Rauz S."/>
            <person name="Walker E.A."/>
            <person name="Shackleton C.H."/>
            <person name="Hewison M."/>
            <person name="Murray P.I."/>
            <person name="Stewart P.M."/>
        </authorList>
    </citation>
    <scope>FUNCTION</scope>
    <scope>CATALYTIC ACTIVITY</scope>
    <scope>TISSUE SPECIFICITY</scope>
</reference>
<reference key="10">
    <citation type="journal article" date="2002" name="Protein Expr. Purif.">
        <title>Purification of full-length recombinant human and rat type 1 11beta-hydroxysteroid dehydrogenases with retained oxidoreductase activities.</title>
        <authorList>
            <person name="Nobel C.S.I."/>
            <person name="Dunas F."/>
            <person name="Abrahmsen L.B."/>
        </authorList>
    </citation>
    <scope>FUNCTION</scope>
    <scope>CATALYTIC ACTIVITY</scope>
    <scope>BIOPHYSICOCHEMICAL PROPERTIES</scope>
</reference>
<reference key="11">
    <citation type="journal article" date="2003" name="Nat. Genet.">
        <title>Mutations in the genes encoding 11beta-hydroxysteroid dehydrogenase type 1 and hexose-6-phosphate dehydrogenase interact to cause cortisone reductase deficiency.</title>
        <authorList>
            <person name="Draper N."/>
            <person name="Walker E.A."/>
            <person name="Bujalska I.J."/>
            <person name="Tomlinson J.W."/>
            <person name="Chalder S.M."/>
            <person name="Arlt W."/>
            <person name="Lavery G.G."/>
            <person name="Bedendo O."/>
            <person name="Ray D.W."/>
            <person name="Laing I."/>
            <person name="Malunowicz E."/>
            <person name="White P.C."/>
            <person name="Hewison M."/>
            <person name="Mason P.J."/>
            <person name="Connell J.M."/>
            <person name="Shackleton C.H.L."/>
            <person name="Stewart P.M."/>
        </authorList>
    </citation>
    <scope>INVOLVEMENT IN CORTRD2</scope>
</reference>
<reference key="12">
    <citation type="journal article" date="2004" name="J. Biol. Chem.">
        <title>Rapid hepatic metabolism of 7-ketocholesterol by 11beta-hydroxysteroid dehydrogenase type 1: species-specific differences between the rat, human, and hamster enzyme.</title>
        <authorList>
            <person name="Schweizer R.A.S."/>
            <person name="Zuercher M."/>
            <person name="Balazs Z."/>
            <person name="Dick B."/>
            <person name="Odermatt A."/>
        </authorList>
    </citation>
    <scope>FUNCTION</scope>
    <scope>CATALYTIC ACTIVITY</scope>
    <scope>BIOPHYSICOCHEMICAL PROPERTIES</scope>
</reference>
<reference key="13">
    <citation type="journal article" date="2004" name="Cell. Mol. Life Sci.">
        <title>Human and rodent type 1 11beta-hydroxysteroid dehydrogenases are 7beta-hydroxycholesterol dehydrogenases involved in oxysterol metabolism.</title>
        <authorList>
            <person name="Hult M."/>
            <person name="Elleby B."/>
            <person name="Shafqat N."/>
            <person name="Svensson S."/>
            <person name="Rane A."/>
            <person name="Joernvall H."/>
            <person name="Abrahmsen L."/>
            <person name="Oppermann U."/>
        </authorList>
    </citation>
    <scope>FUNCTION</scope>
    <scope>CATALYTIC ACTIVITY</scope>
</reference>
<reference key="14">
    <citation type="journal article" date="2004" name="J. Biol. Chem.">
        <title>Appropriate function of 11beta-hydroxysteroid dehydrogenase type 1 in the endoplasmic reticulum lumen is dependent on its N-terminal region sharing similar topological determinants with 50-kDa esterase.</title>
        <authorList>
            <person name="Frick C."/>
            <person name="Atanasov A.G."/>
            <person name="Arnold P."/>
            <person name="Ozols J."/>
            <person name="Odermatt A."/>
        </authorList>
    </citation>
    <scope>FUNCTION</scope>
    <scope>CATALYTIC ACTIVITY</scope>
    <scope>BIOPHYSICOCHEMICAL PROPERTIES</scope>
    <scope>TOPOLOGY</scope>
    <scope>MUTAGENESIS OF 5-LYS-LYS-6; GLU-25; 25-GLU-GLU-26; GLU-26 AND 35-LYS-LYS-36</scope>
</reference>
<reference key="15">
    <citation type="journal article" date="2004" name="FEBS Lett.">
        <title>Hexose-6-phosphate dehydrogenase determines the reaction direction of 11beta-hydroxysteroid dehydrogenase type 1 as an oxoreductase.</title>
        <authorList>
            <person name="Atanasov A.G."/>
            <person name="Nashev L.G."/>
            <person name="Schweizer R.A."/>
            <person name="Frick C."/>
            <person name="Odermatt A."/>
        </authorList>
    </citation>
    <scope>FUNCTION</scope>
    <scope>CATALYTIC ACTIVITY</scope>
    <scope>BIOPHYSICOCHEMICAL PROPERTIES</scope>
    <scope>ACTIVITY REGULATION</scope>
    <scope>SUBCELLULAR LOCATION</scope>
</reference>
<reference key="16">
    <citation type="journal article" date="2007" name="PLoS ONE">
        <title>Hexose-6-phosphate dehydrogenase modulates 11beta-hydroxysteroid dehydrogenase type 1-dependent metabolism of 7-keto- and 7beta-hydroxy-neurosteroids.</title>
        <authorList>
            <person name="Nashev L.G."/>
            <person name="Chandsawangbhuwana C."/>
            <person name="Balazs Z."/>
            <person name="Atanasov A.G."/>
            <person name="Dick B."/>
            <person name="Frey F.J."/>
            <person name="Baker M.E."/>
            <person name="Odermatt A."/>
        </authorList>
    </citation>
    <scope>FUNCTION</scope>
    <scope>CATALYTIC ACTIVITY</scope>
    <scope>ACTIVITY REGULATION</scope>
</reference>
<reference key="17">
    <citation type="journal article" date="2009" name="J. Proteome Res.">
        <title>Glycoproteomics analysis of human liver tissue by combination of multiple enzyme digestion and hydrazide chemistry.</title>
        <authorList>
            <person name="Chen R."/>
            <person name="Jiang X."/>
            <person name="Sun D."/>
            <person name="Han G."/>
            <person name="Wang F."/>
            <person name="Ye M."/>
            <person name="Wang L."/>
            <person name="Zou H."/>
        </authorList>
    </citation>
    <scope>GLYCOSYLATION [LARGE SCALE ANALYSIS] AT ASN-123 AND ASN-162</scope>
    <source>
        <tissue>Liver</tissue>
    </source>
</reference>
<reference key="18">
    <citation type="journal article" date="2011" name="Biochem. J.">
        <title>Hepatic reduction of the secondary bile acid 7-oxolithocholic acid is mediated by 11beta-hydroxysteroid dehydrogenase 1.</title>
        <authorList>
            <person name="Odermatt A."/>
            <person name="Da Cunha T."/>
            <person name="Penno C.A."/>
            <person name="Chandsawangbhuwana C."/>
            <person name="Reichert C."/>
            <person name="Wolf A."/>
            <person name="Dong M."/>
            <person name="Baker M.E."/>
        </authorList>
    </citation>
    <scope>FUNCTION</scope>
    <scope>CATALYTIC ACTIVITY</scope>
    <scope>BIOPHYSICOCHEMICAL PROPERTIES</scope>
    <scope>TISSUE SPECIFICITY</scope>
</reference>
<reference key="19">
    <citation type="journal article" date="2014" name="J. Proteomics">
        <title>An enzyme assisted RP-RPLC approach for in-depth analysis of human liver phosphoproteome.</title>
        <authorList>
            <person name="Bian Y."/>
            <person name="Song C."/>
            <person name="Cheng K."/>
            <person name="Dong M."/>
            <person name="Wang F."/>
            <person name="Huang J."/>
            <person name="Sun D."/>
            <person name="Wang L."/>
            <person name="Ye M."/>
            <person name="Zou H."/>
        </authorList>
    </citation>
    <scope>IDENTIFICATION BY MASS SPECTROMETRY [LARGE SCALE ANALYSIS]</scope>
    <source>
        <tissue>Liver</tissue>
    </source>
</reference>
<reference key="20">
    <citation type="journal article" date="2017" name="J. Endocrinol.">
        <title>Absence of 11-keto reduction of cortisone and 11-ketotestosterone in the model organism zebrafish.</title>
        <authorList>
            <person name="Tsachaki M."/>
            <person name="Meyer A."/>
            <person name="Weger B."/>
            <person name="Kratschmar D.V."/>
            <person name="Tokarz J."/>
            <person name="Adamski J."/>
            <person name="Belting H.G."/>
            <person name="Affolter M."/>
            <person name="Dickmeis T."/>
            <person name="Odermatt A."/>
        </authorList>
    </citation>
    <scope>FUNCTION</scope>
    <scope>CATALYTIC ACTIVITY</scope>
</reference>
<reference key="21">
    <citation type="journal article" date="2019" name="J. Steroid Biochem. Mol. Biol.">
        <title>Enzymatic interconversion of the oxysterols 7beta,25-dihydroxycholesterol and 7-keto,25-hydroxycholesterol by 11beta-hydroxysteroid dehydrogenase type 1 and 2.</title>
        <authorList>
            <person name="Beck K.R."/>
            <person name="Kanagaratnam S."/>
            <person name="Kratschmar D.V."/>
            <person name="Birk J."/>
            <person name="Yamaguchi H."/>
            <person name="Sailer A.W."/>
            <person name="Seuwen K."/>
            <person name="Odermatt A."/>
        </authorList>
    </citation>
    <scope>FUNCTION</scope>
    <scope>CATALYTIC ACTIVITY</scope>
    <scope>BIOPHYSICOCHEMICAL PROPERTIES</scope>
</reference>
<reference evidence="39 40" key="22">
    <citation type="journal article" date="2005" name="J. Biol. Chem.">
        <title>Conformational flexibility in crystal structures of human 11beta-hydroxysteroid dehydrogenase type I provide insights into glucocorticoid interconversion and enzyme regulation.</title>
        <authorList>
            <person name="Hosfield D.J."/>
            <person name="Wu Y."/>
            <person name="Skene R.J."/>
            <person name="Hilgers M."/>
            <person name="Jennings A."/>
            <person name="Snell G.P."/>
            <person name="Aertgeerts K."/>
        </authorList>
    </citation>
    <scope>X-RAY CRYSTALLOGRAPHY (1.8 ANGSTROMS) OF 24-292 IN COMPLEX WITH NADP AND SUBSTRATE ANALOG</scope>
    <scope>SUBUNIT</scope>
</reference>
<reference key="23">
    <citation type="journal article" date="2007" name="Bioorg. Med. Chem. Lett.">
        <title>Adamantane sulfone and sulfonamide 11-beta-HSD1 Inhibitors.</title>
        <authorList>
            <person name="Sorensen B."/>
            <person name="Winn M."/>
            <person name="Rohde J."/>
            <person name="Shuai Q."/>
            <person name="Wang J."/>
            <person name="Fung S."/>
            <person name="Monzon K."/>
            <person name="Chiou W."/>
            <person name="Stolarik D."/>
            <person name="Imade H."/>
            <person name="Pan L."/>
            <person name="Deng X."/>
            <person name="Chovan L."/>
            <person name="Longenecker K."/>
            <person name="Judge R."/>
            <person name="Qin W."/>
            <person name="Brune M."/>
            <person name="Camp H."/>
            <person name="Frevert E.U."/>
            <person name="Jacobson P."/>
            <person name="Link J.T."/>
        </authorList>
    </citation>
    <scope>X-RAY CRYSTALLOGRAPHY (2.3 ANGSTROMS) OF 24-284 IN COMPLEXES WITH ADAMANTANE SULFONE AND SULFONAMIDE INHIBITORS</scope>
    <scope>CATALYTIC ACTIVITY</scope>
</reference>
<reference key="24">
    <citation type="journal article" date="2007" name="Bioorg. Med. Chem. Lett.">
        <title>The discovery of 2-anilinothiazolones as 11beta-HSD1 inhibitors.</title>
        <authorList>
            <person name="Yuan C."/>
            <person name="St Jean D.J. Jr."/>
            <person name="Liu Q."/>
            <person name="Cai L."/>
            <person name="Li A."/>
            <person name="Han N."/>
            <person name="Moniz G."/>
            <person name="Askew B."/>
            <person name="Hungate R.W."/>
            <person name="Johansson L."/>
            <person name="Tedenborg L."/>
            <person name="Pyring D."/>
            <person name="Williams M."/>
            <person name="Hale C."/>
            <person name="Chen M."/>
            <person name="Cupples R."/>
            <person name="Zhang J."/>
            <person name="Jordan S."/>
            <person name="Bartberger M.D."/>
            <person name="Sun Y."/>
            <person name="Emery M."/>
            <person name="Wang M."/>
            <person name="Fotsch C."/>
        </authorList>
    </citation>
    <scope>X-RAY CRYSTALLOGRAPHY (1.9 ANGSTROMS) OF 25-292 IN COMPLEX WITH NADP AND INHIBITOR</scope>
    <scope>SUBUNIT</scope>
    <scope>CATALYTIC ACTIVITY</scope>
</reference>
<reference key="25">
    <citation type="journal article" date="2008" name="Bioorg. Med. Chem. Lett.">
        <title>Pyridine amides as potent and selective inhibitors of 11beta-hydroxysteroid dehydrogenase type 1.</title>
        <authorList>
            <person name="Wang H."/>
            <person name="Ruan Z."/>
            <person name="Li J.J."/>
            <person name="Simpkins L.M."/>
            <person name="Smirk R.A."/>
            <person name="Wu S.C."/>
            <person name="Hutchins R.D."/>
            <person name="Nirschl D.S."/>
            <person name="Van Kirk K."/>
            <person name="Cooper C.B."/>
            <person name="Sutton J.C."/>
            <person name="Ma Z."/>
            <person name="Golla R."/>
            <person name="Seethala R."/>
            <person name="Salyan M.E.K."/>
            <person name="Nayeem A."/>
            <person name="Krystek S.R. Jr."/>
            <person name="Sheriff S."/>
            <person name="Camac D.M."/>
            <person name="Morin P.E."/>
            <person name="Carpenter B."/>
            <person name="Robl J.A."/>
            <person name="Zahler R."/>
            <person name="Gordon D.A."/>
            <person name="Hamann L.G."/>
        </authorList>
    </citation>
    <scope>X-RAY CRYSTALLOGRAPHY (2.35 ANGSTROMS) OF 24-292 IN COMPLEX WITH NADP AND INHIBITOR</scope>
</reference>
<reference key="26">
    <citation type="journal article" date="2008" name="Chem. Biol. Drug Des.">
        <title>Structural characterization and pharmacodynamic effects of an orally active 11beta-hydroxysteroid dehydrogenase type 1 inhibitor.</title>
        <authorList>
            <person name="Hale C."/>
            <person name="Veniant M."/>
            <person name="Wang Z."/>
            <person name="Chen M."/>
            <person name="McCormick J."/>
            <person name="Cupples R."/>
            <person name="Hickman D."/>
            <person name="Min X."/>
            <person name="Sudom A."/>
            <person name="Xu H."/>
            <person name="Matsumoto G."/>
            <person name="Fotsch C."/>
            <person name="St Jean D.J. Jr."/>
            <person name="Wang M."/>
        </authorList>
    </citation>
    <scope>X-RAY CRYSTALLOGRAPHY (2.25 ANGSTROMS) OF 24-292 IN COMPLEX WITH NADP AND INHIBITOR</scope>
</reference>
<reference key="27">
    <citation type="journal article" date="2008" name="J. Med. Chem.">
        <title>Discovery of novel, potent benzamide inhibitors of 11beta-hydroxysteroid dehydrogenase type 1 (11beta-HSD1) exhibiting oral activity in an enzyme inhibition ex vivo model.</title>
        <authorList>
            <person name="Julian L.D."/>
            <person name="Wang Z."/>
            <person name="Bostick T."/>
            <person name="Caille S."/>
            <person name="Choi R."/>
            <person name="DeGraffenreid M."/>
            <person name="Di Y."/>
            <person name="He X."/>
            <person name="Hungate R.W."/>
            <person name="Jaen J.C."/>
            <person name="Liu J."/>
            <person name="Monshouwer M."/>
            <person name="McMinn D."/>
            <person name="Rew Y."/>
            <person name="Sudom A."/>
            <person name="Sun D."/>
            <person name="Tu H."/>
            <person name="Ursu S."/>
            <person name="Walker N."/>
            <person name="Yan X."/>
            <person name="Ye Q."/>
            <person name="Powers J.P."/>
        </authorList>
    </citation>
    <scope>X-RAY CRYSTALLOGRAPHY (2.5 ANGSTROMS) OF 24-292 IN COMPLEX WITH NADP AND INHIBITOR</scope>
</reference>
<reference key="28">
    <citation type="journal article" date="2009" name="Bioorg. Med. Chem. Lett.">
        <title>Discovery and optimization of piperidyl benzamide derivatives as a novel class of 11beta-HSD1 inhibitors.</title>
        <authorList>
            <person name="Rew Y."/>
            <person name="McMinn D.L."/>
            <person name="Wang Z."/>
            <person name="He X."/>
            <person name="Hungate R.W."/>
            <person name="Jaen J.C."/>
            <person name="Sudom A."/>
            <person name="Sun D."/>
            <person name="Tu H."/>
            <person name="Ursu S."/>
            <person name="Villemure E."/>
            <person name="Walker N.P.C."/>
            <person name="Yan X."/>
            <person name="Ye Q."/>
            <person name="Powers J.P."/>
        </authorList>
    </citation>
    <scope>X-RAY CRYSTALLOGRAPHY (2.3 ANGSTROMS) OF 24-292 IN COMPLEX WITH NADP AND INHIBITOR</scope>
</reference>
<reference key="29">
    <citation type="journal article" date="2006" name="Science">
        <title>The consensus coding sequences of human breast and colorectal cancers.</title>
        <authorList>
            <person name="Sjoeblom T."/>
            <person name="Jones S."/>
            <person name="Wood L.D."/>
            <person name="Parsons D.W."/>
            <person name="Lin J."/>
            <person name="Barber T.D."/>
            <person name="Mandelker D."/>
            <person name="Leary R.J."/>
            <person name="Ptak J."/>
            <person name="Silliman N."/>
            <person name="Szabo S."/>
            <person name="Buckhaults P."/>
            <person name="Farrell C."/>
            <person name="Meeh P."/>
            <person name="Markowitz S.D."/>
            <person name="Willis J."/>
            <person name="Dawson D."/>
            <person name="Willson J.K.V."/>
            <person name="Gazdar A.F."/>
            <person name="Hartigan J."/>
            <person name="Wu L."/>
            <person name="Liu C."/>
            <person name="Parmigiani G."/>
            <person name="Park B.H."/>
            <person name="Bachman K.E."/>
            <person name="Papadopoulos N."/>
            <person name="Vogelstein B."/>
            <person name="Kinzler K.W."/>
            <person name="Velculescu V.E."/>
        </authorList>
    </citation>
    <scope>VARIANT [LARGE SCALE ANALYSIS] GLU-148</scope>
</reference>
<keyword id="KW-0002">3D-structure</keyword>
<keyword id="KW-0225">Disease variant</keyword>
<keyword id="KW-0256">Endoplasmic reticulum</keyword>
<keyword id="KW-0325">Glycoprotein</keyword>
<keyword id="KW-0443">Lipid metabolism</keyword>
<keyword id="KW-0472">Membrane</keyword>
<keyword id="KW-0521">NADP</keyword>
<keyword id="KW-0560">Oxidoreductase</keyword>
<keyword id="KW-1267">Proteomics identification</keyword>
<keyword id="KW-1185">Reference proteome</keyword>
<keyword id="KW-0735">Signal-anchor</keyword>
<keyword id="KW-0753">Steroid metabolism</keyword>
<keyword id="KW-0812">Transmembrane</keyword>
<keyword id="KW-1133">Transmembrane helix</keyword>
<proteinExistence type="evidence at protein level"/>
<name>DHI1_HUMAN</name>
<dbReference type="EC" id="1.1.1.146" evidence="2 4 6 8 21 23 24"/>
<dbReference type="EC" id="1.1.1.201" evidence="6 7 8 13 21"/>
<dbReference type="EMBL" id="M76665">
    <property type="protein sequence ID" value="AAC31757.1"/>
    <property type="molecule type" value="Genomic_DNA"/>
</dbReference>
<dbReference type="EMBL" id="M76661">
    <property type="protein sequence ID" value="AAC31757.1"/>
    <property type="status" value="JOINED"/>
    <property type="molecule type" value="Genomic_DNA"/>
</dbReference>
<dbReference type="EMBL" id="M76662">
    <property type="protein sequence ID" value="AAC31757.1"/>
    <property type="status" value="JOINED"/>
    <property type="molecule type" value="Genomic_DNA"/>
</dbReference>
<dbReference type="EMBL" id="M76663">
    <property type="protein sequence ID" value="AAC31757.1"/>
    <property type="status" value="JOINED"/>
    <property type="molecule type" value="Genomic_DNA"/>
</dbReference>
<dbReference type="EMBL" id="M76664">
    <property type="protein sequence ID" value="AAC31757.1"/>
    <property type="status" value="JOINED"/>
    <property type="molecule type" value="Genomic_DNA"/>
</dbReference>
<dbReference type="EMBL" id="AY044084">
    <property type="protein sequence ID" value="AAK83653.1"/>
    <property type="molecule type" value="Genomic_DNA"/>
</dbReference>
<dbReference type="EMBL" id="AY044083">
    <property type="protein sequence ID" value="AAK83653.1"/>
    <property type="status" value="JOINED"/>
    <property type="molecule type" value="Genomic_DNA"/>
</dbReference>
<dbReference type="EMBL" id="AK313973">
    <property type="protein sequence ID" value="BAG36688.1"/>
    <property type="molecule type" value="mRNA"/>
</dbReference>
<dbReference type="EMBL" id="AL022398">
    <property type="status" value="NOT_ANNOTATED_CDS"/>
    <property type="molecule type" value="Genomic_DNA"/>
</dbReference>
<dbReference type="EMBL" id="AL031316">
    <property type="status" value="NOT_ANNOTATED_CDS"/>
    <property type="molecule type" value="Genomic_DNA"/>
</dbReference>
<dbReference type="EMBL" id="CH471100">
    <property type="protein sequence ID" value="EAW93445.1"/>
    <property type="molecule type" value="Genomic_DNA"/>
</dbReference>
<dbReference type="EMBL" id="CH471100">
    <property type="protein sequence ID" value="EAW93446.1"/>
    <property type="molecule type" value="Genomic_DNA"/>
</dbReference>
<dbReference type="EMBL" id="BC012593">
    <property type="protein sequence ID" value="AAH12593.1"/>
    <property type="molecule type" value="mRNA"/>
</dbReference>
<dbReference type="CCDS" id="CCDS1489.1"/>
<dbReference type="PIR" id="A41173">
    <property type="entry name" value="DXHUBH"/>
</dbReference>
<dbReference type="RefSeq" id="NP_001193670.1">
    <property type="nucleotide sequence ID" value="NM_001206741.2"/>
</dbReference>
<dbReference type="RefSeq" id="NP_005516.1">
    <property type="nucleotide sequence ID" value="NM_005525.4"/>
</dbReference>
<dbReference type="RefSeq" id="NP_861420.1">
    <property type="nucleotide sequence ID" value="NM_181755.3"/>
</dbReference>
<dbReference type="PDB" id="1XU7">
    <property type="method" value="X-ray"/>
    <property type="resolution" value="1.80 A"/>
    <property type="chains" value="A/B/C/D=24-292"/>
</dbReference>
<dbReference type="PDB" id="1XU9">
    <property type="method" value="X-ray"/>
    <property type="resolution" value="1.55 A"/>
    <property type="chains" value="A/B/C/D=24-292"/>
</dbReference>
<dbReference type="PDB" id="2BEL">
    <property type="method" value="X-ray"/>
    <property type="resolution" value="2.11 A"/>
    <property type="chains" value="A/B/C/D=26-284"/>
</dbReference>
<dbReference type="PDB" id="2ILT">
    <property type="method" value="X-ray"/>
    <property type="resolution" value="2.30 A"/>
    <property type="chains" value="A=24-285"/>
</dbReference>
<dbReference type="PDB" id="2IRW">
    <property type="method" value="X-ray"/>
    <property type="resolution" value="3.10 A"/>
    <property type="chains" value="A/B/C/D/E/F/G/H=26-289"/>
</dbReference>
<dbReference type="PDB" id="2RBE">
    <property type="method" value="X-ray"/>
    <property type="resolution" value="1.90 A"/>
    <property type="chains" value="A/B/C/D=25-292"/>
</dbReference>
<dbReference type="PDB" id="3BYZ">
    <property type="method" value="X-ray"/>
    <property type="resolution" value="2.69 A"/>
    <property type="chains" value="A/B/C/D=25-292"/>
</dbReference>
<dbReference type="PDB" id="3BZU">
    <property type="method" value="X-ray"/>
    <property type="resolution" value="2.25 A"/>
    <property type="chains" value="A/B/C/D=24-292"/>
</dbReference>
<dbReference type="PDB" id="3CH6">
    <property type="method" value="X-ray"/>
    <property type="resolution" value="2.35 A"/>
    <property type="chains" value="A/B/D/E=24-292"/>
</dbReference>
<dbReference type="PDB" id="3CZR">
    <property type="method" value="X-ray"/>
    <property type="resolution" value="2.35 A"/>
    <property type="chains" value="A/B=24-292"/>
</dbReference>
<dbReference type="PDB" id="3D3E">
    <property type="method" value="X-ray"/>
    <property type="resolution" value="2.60 A"/>
    <property type="chains" value="A/B/C/D=24-292"/>
</dbReference>
<dbReference type="PDB" id="3D4N">
    <property type="method" value="X-ray"/>
    <property type="resolution" value="2.50 A"/>
    <property type="chains" value="A/B/C/D=24-292"/>
</dbReference>
<dbReference type="PDB" id="3D5Q">
    <property type="method" value="X-ray"/>
    <property type="resolution" value="2.55 A"/>
    <property type="chains" value="A/B/C/D=24-292"/>
</dbReference>
<dbReference type="PDB" id="3EY4">
    <property type="method" value="X-ray"/>
    <property type="resolution" value="3.00 A"/>
    <property type="chains" value="A/B/C/D=25-292"/>
</dbReference>
<dbReference type="PDB" id="3FCO">
    <property type="method" value="X-ray"/>
    <property type="resolution" value="2.65 A"/>
    <property type="chains" value="A/B=24-291"/>
</dbReference>
<dbReference type="PDB" id="3FRJ">
    <property type="method" value="X-ray"/>
    <property type="resolution" value="2.30 A"/>
    <property type="chains" value="A/B=24-292"/>
</dbReference>
<dbReference type="PDB" id="3H6K">
    <property type="method" value="X-ray"/>
    <property type="resolution" value="2.19 A"/>
    <property type="chains" value="A/B/C/D=24-292"/>
</dbReference>
<dbReference type="PDB" id="3HFG">
    <property type="method" value="X-ray"/>
    <property type="resolution" value="2.30 A"/>
    <property type="chains" value="A/B/C/D=24-292"/>
</dbReference>
<dbReference type="PDB" id="3OQ1">
    <property type="method" value="X-ray"/>
    <property type="resolution" value="2.60 A"/>
    <property type="chains" value="A/B/C/D=24-292"/>
</dbReference>
<dbReference type="PDB" id="3PDJ">
    <property type="method" value="X-ray"/>
    <property type="resolution" value="2.30 A"/>
    <property type="chains" value="A/B=24-292"/>
</dbReference>
<dbReference type="PDB" id="3QQP">
    <property type="method" value="X-ray"/>
    <property type="resolution" value="2.72 A"/>
    <property type="chains" value="A/B/C/D=24-292"/>
</dbReference>
<dbReference type="PDB" id="3TFQ">
    <property type="method" value="X-ray"/>
    <property type="resolution" value="1.80 A"/>
    <property type="chains" value="A/B/D/E=24-292"/>
</dbReference>
<dbReference type="PDB" id="4BB5">
    <property type="method" value="X-ray"/>
    <property type="resolution" value="2.20 A"/>
    <property type="chains" value="A/B/C/D=1-292"/>
</dbReference>
<dbReference type="PDB" id="4BB6">
    <property type="method" value="X-ray"/>
    <property type="resolution" value="2.55 A"/>
    <property type="chains" value="A/B=1-292"/>
</dbReference>
<dbReference type="PDB" id="4C7J">
    <property type="method" value="X-ray"/>
    <property type="resolution" value="2.16 A"/>
    <property type="chains" value="A/B/C/D=24-292"/>
</dbReference>
<dbReference type="PDB" id="4C7K">
    <property type="method" value="X-ray"/>
    <property type="resolution" value="1.91 A"/>
    <property type="chains" value="A/B/C/D=24-292"/>
</dbReference>
<dbReference type="PDB" id="4HFR">
    <property type="method" value="X-ray"/>
    <property type="resolution" value="2.73 A"/>
    <property type="chains" value="A/B=24-292"/>
</dbReference>
<dbReference type="PDB" id="4HX5">
    <property type="method" value="X-ray"/>
    <property type="resolution" value="2.19 A"/>
    <property type="chains" value="A/B/C/D=24-292"/>
</dbReference>
<dbReference type="PDB" id="4IJU">
    <property type="method" value="X-ray"/>
    <property type="resolution" value="2.35 A"/>
    <property type="chains" value="A/B/D/E=24-292"/>
</dbReference>
<dbReference type="PDB" id="4IJV">
    <property type="method" value="X-ray"/>
    <property type="resolution" value="2.35 A"/>
    <property type="chains" value="A/B/D/E=24-292"/>
</dbReference>
<dbReference type="PDB" id="4IJW">
    <property type="method" value="X-ray"/>
    <property type="resolution" value="2.35 A"/>
    <property type="chains" value="A/B/D/E=24-292"/>
</dbReference>
<dbReference type="PDB" id="4K1L">
    <property type="method" value="X-ray"/>
    <property type="resolution" value="1.96 A"/>
    <property type="chains" value="A/B/C/D=24-292"/>
</dbReference>
<dbReference type="PDB" id="4P38">
    <property type="method" value="X-ray"/>
    <property type="resolution" value="2.80 A"/>
    <property type="chains" value="A/B=26-290"/>
</dbReference>
<dbReference type="PDB" id="4YYZ">
    <property type="method" value="X-ray"/>
    <property type="resolution" value="3.20 A"/>
    <property type="chains" value="A/B=26-284"/>
</dbReference>
<dbReference type="PDB" id="5PGU">
    <property type="method" value="X-ray"/>
    <property type="resolution" value="2.35 A"/>
    <property type="chains" value="A/B/D/E=24-292"/>
</dbReference>
<dbReference type="PDB" id="5PGV">
    <property type="method" value="X-ray"/>
    <property type="resolution" value="2.35 A"/>
    <property type="chains" value="A/B/D/E=24-292"/>
</dbReference>
<dbReference type="PDB" id="5PGW">
    <property type="method" value="X-ray"/>
    <property type="resolution" value="2.37 A"/>
    <property type="chains" value="A/B/D/E=24-292"/>
</dbReference>
<dbReference type="PDB" id="5PGX">
    <property type="method" value="X-ray"/>
    <property type="resolution" value="2.50 A"/>
    <property type="chains" value="A/B/D/E=24-292"/>
</dbReference>
<dbReference type="PDB" id="5PGY">
    <property type="method" value="X-ray"/>
    <property type="resolution" value="2.07 A"/>
    <property type="chains" value="A/B/D/E=24-292"/>
</dbReference>
<dbReference type="PDB" id="5QII">
    <property type="method" value="X-ray"/>
    <property type="resolution" value="2.45 A"/>
    <property type="chains" value="A/B/D/E=24-292"/>
</dbReference>
<dbReference type="PDBsum" id="1XU7"/>
<dbReference type="PDBsum" id="1XU9"/>
<dbReference type="PDBsum" id="2BEL"/>
<dbReference type="PDBsum" id="2ILT"/>
<dbReference type="PDBsum" id="2IRW"/>
<dbReference type="PDBsum" id="2RBE"/>
<dbReference type="PDBsum" id="3BYZ"/>
<dbReference type="PDBsum" id="3BZU"/>
<dbReference type="PDBsum" id="3CH6"/>
<dbReference type="PDBsum" id="3CZR"/>
<dbReference type="PDBsum" id="3D3E"/>
<dbReference type="PDBsum" id="3D4N"/>
<dbReference type="PDBsum" id="3D5Q"/>
<dbReference type="PDBsum" id="3EY4"/>
<dbReference type="PDBsum" id="3FCO"/>
<dbReference type="PDBsum" id="3FRJ"/>
<dbReference type="PDBsum" id="3H6K"/>
<dbReference type="PDBsum" id="3HFG"/>
<dbReference type="PDBsum" id="3OQ1"/>
<dbReference type="PDBsum" id="3PDJ"/>
<dbReference type="PDBsum" id="3QQP"/>
<dbReference type="PDBsum" id="3TFQ"/>
<dbReference type="PDBsum" id="4BB5"/>
<dbReference type="PDBsum" id="4BB6"/>
<dbReference type="PDBsum" id="4C7J"/>
<dbReference type="PDBsum" id="4C7K"/>
<dbReference type="PDBsum" id="4HFR"/>
<dbReference type="PDBsum" id="4HX5"/>
<dbReference type="PDBsum" id="4IJU"/>
<dbReference type="PDBsum" id="4IJV"/>
<dbReference type="PDBsum" id="4IJW"/>
<dbReference type="PDBsum" id="4K1L"/>
<dbReference type="PDBsum" id="4P38"/>
<dbReference type="PDBsum" id="4YYZ"/>
<dbReference type="PDBsum" id="5PGU"/>
<dbReference type="PDBsum" id="5PGV"/>
<dbReference type="PDBsum" id="5PGW"/>
<dbReference type="PDBsum" id="5PGX"/>
<dbReference type="PDBsum" id="5PGY"/>
<dbReference type="PDBsum" id="5QII"/>
<dbReference type="SMR" id="P28845"/>
<dbReference type="BioGRID" id="109523">
    <property type="interactions" value="24"/>
</dbReference>
<dbReference type="CORUM" id="P28845"/>
<dbReference type="DIP" id="DIP-59618N"/>
<dbReference type="FunCoup" id="P28845">
    <property type="interactions" value="216"/>
</dbReference>
<dbReference type="IntAct" id="P28845">
    <property type="interactions" value="12"/>
</dbReference>
<dbReference type="STRING" id="9606.ENSP00000355995"/>
<dbReference type="BindingDB" id="P28845"/>
<dbReference type="ChEMBL" id="CHEMBL4235"/>
<dbReference type="DrugBank" id="DB08280">
    <property type="generic name" value="(1S,3R,4S,5S,7S)-4-{[2-(4-METHOXYPHENOXY)-2-METHYLPROPANOYL]AMINO}ADAMANTANE-1-CARBOXAMIDE"/>
</dbReference>
<dbReference type="DrugBank" id="DB07049">
    <property type="generic name" value="(2R)-1-[(4-tert-butylphenyl)sulfonyl]-2-methyl-4-(4-nitrophenyl)piperazine"/>
</dbReference>
<dbReference type="DrugBank" id="DB06992">
    <property type="generic name" value="(3,3-dimethylpiperidin-1-yl)(6-(3-fluoro-4-methylphenyl)pyridin-2-yl)methanone"/>
</dbReference>
<dbReference type="DrugBank" id="DB08771">
    <property type="generic name" value="(5R)-2-[(2-Fluorophenyl)amino]-5-isopropyl-1,3-thiazol-4(5H)-one"/>
</dbReference>
<dbReference type="DrugBank" id="DB07866">
    <property type="generic name" value="(5S)-2-(Cyclooctylamino)-5-methyl-5-propyl-1,3-thiazol-4(5H)-one"/>
</dbReference>
<dbReference type="DrugBank" id="DB07310">
    <property type="generic name" value="(5S)-2-{[(1S)-1-(2-fluorophenyl)ethyl]amino}-5-methyl-5-(trifluoromethyl)-1,3-thiazol-4(5H)-one"/>
</dbReference>
<dbReference type="DrugBank" id="DB07017">
    <property type="generic name" value="(5S)-2-{[(1S)-1-(4-Fluorophenyl)ethyl]amino}-5-(2-hydroxy-2-propanyl)-5-methyl-1,3-thiazol-4(5H)-one"/>
</dbReference>
<dbReference type="DrugBank" id="DB07624">
    <property type="generic name" value="1-{[(3R)-3-methyl-4-({4-[(1S)-2,2,2-trifluoro-1-hydroxy-1-methylethyl]phenyl}sulfonyl)piperazin-1-yl]methyl}cyclopropanecarboxamide"/>
</dbReference>
<dbReference type="DrugBank" id="DB08277">
    <property type="generic name" value="2-(2-CHLORO-4-FLUOROPHENOXY)-2-METHYL-N-[(1R,2S,3S,5S,7S)-5-(METHYLSULFONYL)-2-ADAMANTYL]PROPANAMIDE"/>
</dbReference>
<dbReference type="DrugBank" id="DB07056">
    <property type="generic name" value="2-(6-{[(3-chloro-2-methylphenyl)sulfonyl]amino}pyridin-2-yl)-N,N-diethylacetamide"/>
</dbReference>
<dbReference type="DrugBank" id="DB03814">
    <property type="generic name" value="2-(N-morpholino)ethanesulfonic acid"/>
</dbReference>
<dbReference type="DrugBank" id="DB14875">
    <property type="generic name" value="AZD-4017"/>
</dbReference>
<dbReference type="DrugBank" id="DB02329">
    <property type="generic name" value="Carbenoxolone"/>
</dbReference>
<dbReference type="DrugBank" id="DB04652">
    <property type="generic name" value="Corticosterone"/>
</dbReference>
<dbReference type="DrugBank" id="DB01234">
    <property type="generic name" value="Dexamethasone"/>
</dbReference>
<dbReference type="DrugBank" id="DB14649">
    <property type="generic name" value="Dexamethasone acetate"/>
</dbReference>
<dbReference type="DrugBank" id="DB00687">
    <property type="generic name" value="Fludrocortisone"/>
</dbReference>
<dbReference type="DrugBank" id="DB13751">
    <property type="generic name" value="Glycyrrhizic acid"/>
</dbReference>
<dbReference type="DrugBank" id="DB00741">
    <property type="generic name" value="Hydrocortisone"/>
</dbReference>
<dbReference type="DrugBank" id="DB05064">
    <property type="generic name" value="INCB13739"/>
</dbReference>
<dbReference type="DrugBank" id="DB16220">
    <property type="generic name" value="Lonapegsomatropin"/>
</dbReference>
<dbReference type="DrugBank" id="DB00959">
    <property type="generic name" value="Methylprednisolone"/>
</dbReference>
<dbReference type="DrugBank" id="DB07619">
    <property type="generic name" value="N-cyclopropyl-N-(trans-4-pyridin-3-ylcyclohexyl)-4-[(1S)-2,2,2-trifluoro-1-hydroxy-1-methylethyl]benzamide"/>
</dbReference>
<dbReference type="DrugBank" id="DB07316">
    <property type="generic name" value="N-{1-[(1-carbamoylcyclopropyl)methyl]piperidin-4-yl}-N-cyclopropyl-4-[(1S)-2,2,2-trifluoro-1-hydroxy-1-methylethyl]benzamide"/>
</dbReference>
<dbReference type="DrugBank" id="DB00461">
    <property type="generic name" value="Nabumetone"/>
</dbReference>
<dbReference type="DrugBank" id="DB00157">
    <property type="generic name" value="NADH"/>
</dbReference>
<dbReference type="DrugBank" id="DB03461">
    <property type="generic name" value="Nicotinamide adenine dinucleotide phosphate"/>
</dbReference>
<dbReference type="DrugBank" id="DB14631">
    <property type="generic name" value="Prednisolone phosphate"/>
</dbReference>
<dbReference type="DrugBank" id="DB00635">
    <property type="generic name" value="Prednisone"/>
</dbReference>
<dbReference type="DrugBank" id="DB15093">
    <property type="generic name" value="Somapacitan"/>
</dbReference>
<dbReference type="DrugBank" id="DB15588">
    <property type="generic name" value="Ursolic acid"/>
</dbReference>
<dbReference type="DrugCentral" id="P28845"/>
<dbReference type="GuidetoPHARMACOLOGY" id="2763"/>
<dbReference type="SwissLipids" id="SLP:000000809"/>
<dbReference type="GlyConnect" id="1158">
    <property type="glycosylation" value="2 N-Linked glycans (2 sites)"/>
</dbReference>
<dbReference type="GlyCosmos" id="P28845">
    <property type="glycosylation" value="3 sites, 2 glycans"/>
</dbReference>
<dbReference type="GlyGen" id="P28845">
    <property type="glycosylation" value="3 sites, 6 N-linked glycans (2 sites)"/>
</dbReference>
<dbReference type="iPTMnet" id="P28845"/>
<dbReference type="PhosphoSitePlus" id="P28845"/>
<dbReference type="BioMuta" id="HSD11B1"/>
<dbReference type="DMDM" id="118569"/>
<dbReference type="jPOST" id="P28845"/>
<dbReference type="MassIVE" id="P28845"/>
<dbReference type="PaxDb" id="9606-ENSP00000355995"/>
<dbReference type="PeptideAtlas" id="P28845"/>
<dbReference type="ProteomicsDB" id="54504"/>
<dbReference type="Antibodypedia" id="34595">
    <property type="antibodies" value="419 antibodies from 40 providers"/>
</dbReference>
<dbReference type="DNASU" id="3290"/>
<dbReference type="Ensembl" id="ENST00000367027.5">
    <property type="protein sequence ID" value="ENSP00000355994.3"/>
    <property type="gene ID" value="ENSG00000117594.10"/>
</dbReference>
<dbReference type="Ensembl" id="ENST00000367028.6">
    <property type="protein sequence ID" value="ENSP00000355995.1"/>
    <property type="gene ID" value="ENSG00000117594.10"/>
</dbReference>
<dbReference type="GeneID" id="3290"/>
<dbReference type="KEGG" id="hsa:3290"/>
<dbReference type="MANE-Select" id="ENST00000367027.5">
    <property type="protein sequence ID" value="ENSP00000355994.3"/>
    <property type="RefSeq nucleotide sequence ID" value="NM_005525.4"/>
    <property type="RefSeq protein sequence ID" value="NP_005516.1"/>
</dbReference>
<dbReference type="AGR" id="HGNC:5208"/>
<dbReference type="CTD" id="3290"/>
<dbReference type="DisGeNET" id="3290"/>
<dbReference type="GeneCards" id="HSD11B1"/>
<dbReference type="HGNC" id="HGNC:5208">
    <property type="gene designation" value="HSD11B1"/>
</dbReference>
<dbReference type="HPA" id="ENSG00000117594">
    <property type="expression patterns" value="Tissue enriched (liver)"/>
</dbReference>
<dbReference type="MalaCards" id="HSD11B1"/>
<dbReference type="MIM" id="600713">
    <property type="type" value="gene"/>
</dbReference>
<dbReference type="MIM" id="614662">
    <property type="type" value="phenotype"/>
</dbReference>
<dbReference type="neXtProt" id="NX_P28845"/>
<dbReference type="OpenTargets" id="ENSG00000117594"/>
<dbReference type="Orphanet" id="168588">
    <property type="disease" value="Hyperandrogenism due to cortisone reductase deficiency"/>
</dbReference>
<dbReference type="PharmGKB" id="PA29476"/>
<dbReference type="VEuPathDB" id="HostDB:ENSG00000117594"/>
<dbReference type="eggNOG" id="KOG1205">
    <property type="taxonomic scope" value="Eukaryota"/>
</dbReference>
<dbReference type="GeneTree" id="ENSGT00940000160097"/>
<dbReference type="InParanoid" id="P28845"/>
<dbReference type="OMA" id="SMEDMTF"/>
<dbReference type="OrthoDB" id="1933717at2759"/>
<dbReference type="PAN-GO" id="P28845">
    <property type="GO annotations" value="5 GO annotations based on evolutionary models"/>
</dbReference>
<dbReference type="PhylomeDB" id="P28845"/>
<dbReference type="TreeFam" id="TF329114"/>
<dbReference type="BioCyc" id="MetaCyc:HS04154-MONOMER"/>
<dbReference type="BRENDA" id="1.1.1.146">
    <property type="organism ID" value="2681"/>
</dbReference>
<dbReference type="BRENDA" id="1.1.1.B40">
    <property type="organism ID" value="2681"/>
</dbReference>
<dbReference type="PathwayCommons" id="P28845"/>
<dbReference type="Reactome" id="R-HSA-194002">
    <property type="pathway name" value="Glucocorticoid biosynthesis"/>
</dbReference>
<dbReference type="Reactome" id="R-HSA-9757110">
    <property type="pathway name" value="Prednisone ADME"/>
</dbReference>
<dbReference type="SABIO-RK" id="P28845"/>
<dbReference type="SignaLink" id="P28845"/>
<dbReference type="SIGNOR" id="P28845"/>
<dbReference type="BioGRID-ORCS" id="3290">
    <property type="hits" value="12 hits in 1155 CRISPR screens"/>
</dbReference>
<dbReference type="ChiTaRS" id="HSD11B1">
    <property type="organism name" value="human"/>
</dbReference>
<dbReference type="EvolutionaryTrace" id="P28845"/>
<dbReference type="GeneWiki" id="11%CE%B2-hydroxysteroid_dehydrogenase_type_1"/>
<dbReference type="GenomeRNAi" id="3290"/>
<dbReference type="Pharos" id="P28845">
    <property type="development level" value="Tclin"/>
</dbReference>
<dbReference type="PRO" id="PR:P28845"/>
<dbReference type="Proteomes" id="UP000005640">
    <property type="component" value="Chromosome 1"/>
</dbReference>
<dbReference type="RNAct" id="P28845">
    <property type="molecule type" value="protein"/>
</dbReference>
<dbReference type="Bgee" id="ENSG00000117594">
    <property type="expression patterns" value="Expressed in decidua and 158 other cell types or tissues"/>
</dbReference>
<dbReference type="ExpressionAtlas" id="P28845">
    <property type="expression patterns" value="baseline and differential"/>
</dbReference>
<dbReference type="GO" id="GO:0005789">
    <property type="term" value="C:endoplasmic reticulum membrane"/>
    <property type="evidence" value="ECO:0000314"/>
    <property type="project" value="UniProtKB"/>
</dbReference>
<dbReference type="GO" id="GO:0043231">
    <property type="term" value="C:intracellular membrane-bounded organelle"/>
    <property type="evidence" value="ECO:0000318"/>
    <property type="project" value="GO_Central"/>
</dbReference>
<dbReference type="GO" id="GO:0016020">
    <property type="term" value="C:membrane"/>
    <property type="evidence" value="ECO:0007005"/>
    <property type="project" value="UniProtKB"/>
</dbReference>
<dbReference type="GO" id="GO:0070524">
    <property type="term" value="F:11-beta-hydroxysteroid dehydrogenase (NADP+) activity"/>
    <property type="evidence" value="ECO:0000314"/>
    <property type="project" value="UniProtKB"/>
</dbReference>
<dbReference type="GO" id="GO:0047022">
    <property type="term" value="F:7-beta-hydroxysteroid dehydrogenase (NADP+) activity"/>
    <property type="evidence" value="ECO:0007669"/>
    <property type="project" value="RHEA"/>
</dbReference>
<dbReference type="GO" id="GO:0102196">
    <property type="term" value="F:cortisol dehydrogenase (NAD+) activity"/>
    <property type="evidence" value="ECO:0007669"/>
    <property type="project" value="RHEA"/>
</dbReference>
<dbReference type="GO" id="GO:0050661">
    <property type="term" value="F:NADP binding"/>
    <property type="evidence" value="ECO:0000314"/>
    <property type="project" value="UniProtKB"/>
</dbReference>
<dbReference type="GO" id="GO:0042803">
    <property type="term" value="F:protein homodimerization activity"/>
    <property type="evidence" value="ECO:0000314"/>
    <property type="project" value="UniProtKB"/>
</dbReference>
<dbReference type="GO" id="GO:0005496">
    <property type="term" value="F:steroid binding"/>
    <property type="evidence" value="ECO:0000318"/>
    <property type="project" value="GO_Central"/>
</dbReference>
<dbReference type="GO" id="GO:0030324">
    <property type="term" value="P:lung development"/>
    <property type="evidence" value="ECO:0007669"/>
    <property type="project" value="Ensembl"/>
</dbReference>
<dbReference type="GO" id="GO:0006706">
    <property type="term" value="P:steroid catabolic process"/>
    <property type="evidence" value="ECO:0000318"/>
    <property type="project" value="GO_Central"/>
</dbReference>
<dbReference type="CDD" id="cd05332">
    <property type="entry name" value="11beta-HSD1_like_SDR_c"/>
    <property type="match status" value="1"/>
</dbReference>
<dbReference type="FunFam" id="3.40.50.720:FF:000329">
    <property type="entry name" value="Corticosteroid 11-beta-dehydrogenase isozyme 1"/>
    <property type="match status" value="1"/>
</dbReference>
<dbReference type="Gene3D" id="3.40.50.720">
    <property type="entry name" value="NAD(P)-binding Rossmann-like Domain"/>
    <property type="match status" value="1"/>
</dbReference>
<dbReference type="InterPro" id="IPR051253">
    <property type="entry name" value="11-beta-HSD"/>
</dbReference>
<dbReference type="InterPro" id="IPR036291">
    <property type="entry name" value="NAD(P)-bd_dom_sf"/>
</dbReference>
<dbReference type="InterPro" id="IPR020904">
    <property type="entry name" value="Sc_DH/Rdtase_CS"/>
</dbReference>
<dbReference type="InterPro" id="IPR002347">
    <property type="entry name" value="SDR_fam"/>
</dbReference>
<dbReference type="PANTHER" id="PTHR44279:SF1">
    <property type="entry name" value="11-BETA-HYDROXYSTEROID DEHYDROGENASE 1"/>
    <property type="match status" value="1"/>
</dbReference>
<dbReference type="PANTHER" id="PTHR44279">
    <property type="entry name" value="HYDROXYSTEROID (11-BETA) DEHYDROGENASE 1-LIKE B-RELATED"/>
    <property type="match status" value="1"/>
</dbReference>
<dbReference type="Pfam" id="PF00106">
    <property type="entry name" value="adh_short"/>
    <property type="match status" value="1"/>
</dbReference>
<dbReference type="PRINTS" id="PR00081">
    <property type="entry name" value="GDHRDH"/>
</dbReference>
<dbReference type="SUPFAM" id="SSF51735">
    <property type="entry name" value="NAD(P)-binding Rossmann-fold domains"/>
    <property type="match status" value="1"/>
</dbReference>
<dbReference type="PROSITE" id="PS00061">
    <property type="entry name" value="ADH_SHORT"/>
    <property type="match status" value="1"/>
</dbReference>